<feature type="signal peptide" evidence="2">
    <location>
        <begin position="1"/>
        <end position="28"/>
    </location>
</feature>
<feature type="chain" id="PRO_0000158956" description="Mucin-4">
    <location>
        <begin position="29"/>
        <end position="5412"/>
    </location>
</feature>
<feature type="chain" id="PRO_0000274225" description="Mucin-4 alpha chain" evidence="20">
    <location>
        <begin position="29"/>
        <end position="4687"/>
    </location>
</feature>
<feature type="chain" id="PRO_0000274226" description="Mucin-4 beta chain" evidence="20">
    <location>
        <begin position="4688"/>
        <end position="5412"/>
    </location>
</feature>
<feature type="transmembrane region" description="Helical" evidence="2">
    <location>
        <begin position="5369"/>
        <end position="5389"/>
    </location>
</feature>
<feature type="domain" description="NIDO" evidence="6">
    <location>
        <begin position="4397"/>
        <end position="4552"/>
    </location>
</feature>
<feature type="domain" description="AMOP" evidence="4">
    <location>
        <begin position="4553"/>
        <end position="4668"/>
    </location>
</feature>
<feature type="domain" description="VWFD" evidence="7">
    <location>
        <begin position="4680"/>
        <end position="4880"/>
    </location>
</feature>
<feature type="domain" description="EGF-like 1" evidence="3">
    <location>
        <begin position="5118"/>
        <end position="5157"/>
    </location>
</feature>
<feature type="domain" description="EGF-like 2" evidence="3">
    <location>
        <begin position="5321"/>
        <end position="5360"/>
    </location>
</feature>
<feature type="region of interest" description="Disordered" evidence="8">
    <location>
        <begin position="40"/>
        <end position="87"/>
    </location>
</feature>
<feature type="region of interest" description="Variable number of tandem repeats (VNTR)" evidence="19">
    <location>
        <begin position="43"/>
        <end position="4241"/>
    </location>
</feature>
<feature type="region of interest" description="Disordered" evidence="8">
    <location>
        <begin position="142"/>
        <end position="249"/>
    </location>
</feature>
<feature type="region of interest" description="Disordered" evidence="8">
    <location>
        <begin position="267"/>
        <end position="286"/>
    </location>
</feature>
<feature type="region of interest" description="Disordered" evidence="8">
    <location>
        <begin position="303"/>
        <end position="328"/>
    </location>
</feature>
<feature type="region of interest" description="Disordered" evidence="8">
    <location>
        <begin position="353"/>
        <end position="383"/>
    </location>
</feature>
<feature type="region of interest" description="Disordered" evidence="8">
    <location>
        <begin position="438"/>
        <end position="473"/>
    </location>
</feature>
<feature type="region of interest" description="Disordered" evidence="8">
    <location>
        <begin position="488"/>
        <end position="580"/>
    </location>
</feature>
<feature type="region of interest" description="Disordered" evidence="8">
    <location>
        <begin position="592"/>
        <end position="853"/>
    </location>
</feature>
<feature type="region of interest" description="Disordered" evidence="8">
    <location>
        <begin position="868"/>
        <end position="963"/>
    </location>
</feature>
<feature type="region of interest" description="Disordered" evidence="8">
    <location>
        <begin position="983"/>
        <end position="1864"/>
    </location>
</feature>
<feature type="region of interest" description="Disordered" evidence="8">
    <location>
        <begin position="1878"/>
        <end position="2078"/>
    </location>
</feature>
<feature type="region of interest" description="Disordered" evidence="8">
    <location>
        <begin position="2111"/>
        <end position="2220"/>
    </location>
</feature>
<feature type="region of interest" description="Disordered" evidence="8">
    <location>
        <begin position="2232"/>
        <end position="2814"/>
    </location>
</feature>
<feature type="region of interest" description="Disordered" evidence="8">
    <location>
        <begin position="2837"/>
        <end position="3306"/>
    </location>
</feature>
<feature type="region of interest" description="Disordered" evidence="8">
    <location>
        <begin position="3320"/>
        <end position="3580"/>
    </location>
</feature>
<feature type="region of interest" description="Disordered" evidence="8">
    <location>
        <begin position="3592"/>
        <end position="3644"/>
    </location>
</feature>
<feature type="region of interest" description="Disordered" evidence="8">
    <location>
        <begin position="3656"/>
        <end position="3756"/>
    </location>
</feature>
<feature type="region of interest" description="Disordered" evidence="8">
    <location>
        <begin position="3769"/>
        <end position="4223"/>
    </location>
</feature>
<feature type="region of interest" description="Disordered" evidence="8">
    <location>
        <begin position="4242"/>
        <end position="4288"/>
    </location>
</feature>
<feature type="compositionally biased region" description="Low complexity" evidence="8">
    <location>
        <begin position="142"/>
        <end position="163"/>
    </location>
</feature>
<feature type="compositionally biased region" description="Polar residues" evidence="8">
    <location>
        <begin position="164"/>
        <end position="199"/>
    </location>
</feature>
<feature type="compositionally biased region" description="Low complexity" evidence="8">
    <location>
        <begin position="200"/>
        <end position="223"/>
    </location>
</feature>
<feature type="compositionally biased region" description="Polar residues" evidence="8">
    <location>
        <begin position="224"/>
        <end position="249"/>
    </location>
</feature>
<feature type="compositionally biased region" description="Polar residues" evidence="8">
    <location>
        <begin position="267"/>
        <end position="285"/>
    </location>
</feature>
<feature type="compositionally biased region" description="Polar residues" evidence="8">
    <location>
        <begin position="306"/>
        <end position="328"/>
    </location>
</feature>
<feature type="compositionally biased region" description="Polar residues" evidence="8">
    <location>
        <begin position="358"/>
        <end position="367"/>
    </location>
</feature>
<feature type="compositionally biased region" description="Low complexity" evidence="8">
    <location>
        <begin position="368"/>
        <end position="383"/>
    </location>
</feature>
<feature type="compositionally biased region" description="Polar residues" evidence="8">
    <location>
        <begin position="450"/>
        <end position="459"/>
    </location>
</feature>
<feature type="compositionally biased region" description="Polar residues" evidence="8">
    <location>
        <begin position="488"/>
        <end position="526"/>
    </location>
</feature>
<feature type="compositionally biased region" description="Polar residues" evidence="8">
    <location>
        <begin position="546"/>
        <end position="557"/>
    </location>
</feature>
<feature type="compositionally biased region" description="Low complexity" evidence="8">
    <location>
        <begin position="558"/>
        <end position="577"/>
    </location>
</feature>
<feature type="compositionally biased region" description="Low complexity" evidence="8">
    <location>
        <begin position="615"/>
        <end position="627"/>
    </location>
</feature>
<feature type="compositionally biased region" description="Polar residues" evidence="8">
    <location>
        <begin position="628"/>
        <end position="677"/>
    </location>
</feature>
<feature type="compositionally biased region" description="Low complexity" evidence="8">
    <location>
        <begin position="705"/>
        <end position="717"/>
    </location>
</feature>
<feature type="compositionally biased region" description="Polar residues" evidence="8">
    <location>
        <begin position="729"/>
        <end position="746"/>
    </location>
</feature>
<feature type="compositionally biased region" description="Low complexity" evidence="8">
    <location>
        <begin position="756"/>
        <end position="771"/>
    </location>
</feature>
<feature type="compositionally biased region" description="Polar residues" evidence="8">
    <location>
        <begin position="772"/>
        <end position="789"/>
    </location>
</feature>
<feature type="compositionally biased region" description="Low complexity" evidence="8">
    <location>
        <begin position="790"/>
        <end position="828"/>
    </location>
</feature>
<feature type="compositionally biased region" description="Polar residues" evidence="8">
    <location>
        <begin position="829"/>
        <end position="852"/>
    </location>
</feature>
<feature type="compositionally biased region" description="Low complexity" evidence="8">
    <location>
        <begin position="885"/>
        <end position="903"/>
    </location>
</feature>
<feature type="compositionally biased region" description="Polar residues" evidence="8">
    <location>
        <begin position="907"/>
        <end position="928"/>
    </location>
</feature>
<feature type="compositionally biased region" description="Low complexity" evidence="8">
    <location>
        <begin position="929"/>
        <end position="950"/>
    </location>
</feature>
<feature type="compositionally biased region" description="Polar residues" evidence="8">
    <location>
        <begin position="951"/>
        <end position="963"/>
    </location>
</feature>
<feature type="compositionally biased region" description="Low complexity" evidence="8">
    <location>
        <begin position="1007"/>
        <end position="1024"/>
    </location>
</feature>
<feature type="compositionally biased region" description="Polar residues" evidence="8">
    <location>
        <begin position="1028"/>
        <end position="1054"/>
    </location>
</feature>
<feature type="compositionally biased region" description="Polar residues" evidence="8">
    <location>
        <begin position="1060"/>
        <end position="1086"/>
    </location>
</feature>
<feature type="compositionally biased region" description="Polar residues" evidence="8">
    <location>
        <begin position="1092"/>
        <end position="1118"/>
    </location>
</feature>
<feature type="compositionally biased region" description="Polar residues" evidence="8">
    <location>
        <begin position="1124"/>
        <end position="1150"/>
    </location>
</feature>
<feature type="compositionally biased region" description="Polar residues" evidence="8">
    <location>
        <begin position="1157"/>
        <end position="1197"/>
    </location>
</feature>
<feature type="compositionally biased region" description="Polar residues" evidence="8">
    <location>
        <begin position="1204"/>
        <end position="1213"/>
    </location>
</feature>
<feature type="compositionally biased region" description="Polar residues" evidence="8">
    <location>
        <begin position="1221"/>
        <end position="1246"/>
    </location>
</feature>
<feature type="compositionally biased region" description="Polar residues" evidence="8">
    <location>
        <begin position="1252"/>
        <end position="1262"/>
    </location>
</feature>
<feature type="compositionally biased region" description="Low complexity" evidence="8">
    <location>
        <begin position="1263"/>
        <end position="1279"/>
    </location>
</feature>
<feature type="compositionally biased region" description="Polar residues" evidence="8">
    <location>
        <begin position="1281"/>
        <end position="1325"/>
    </location>
</feature>
<feature type="compositionally biased region" description="Polar residues" evidence="8">
    <location>
        <begin position="1332"/>
        <end position="1342"/>
    </location>
</feature>
<feature type="compositionally biased region" description="Polar residues" evidence="8">
    <location>
        <begin position="1349"/>
        <end position="1358"/>
    </location>
</feature>
<feature type="compositionally biased region" description="Polar residues" evidence="8">
    <location>
        <begin position="1365"/>
        <end position="1405"/>
    </location>
</feature>
<feature type="compositionally biased region" description="Polar residues" evidence="8">
    <location>
        <begin position="1412"/>
        <end position="1421"/>
    </location>
</feature>
<feature type="compositionally biased region" description="Polar residues" evidence="8">
    <location>
        <begin position="1429"/>
        <end position="1454"/>
    </location>
</feature>
<feature type="compositionally biased region" description="Polar residues" evidence="8">
    <location>
        <begin position="1460"/>
        <end position="1470"/>
    </location>
</feature>
<feature type="compositionally biased region" description="Low complexity" evidence="8">
    <location>
        <begin position="1471"/>
        <end position="1487"/>
    </location>
</feature>
<feature type="compositionally biased region" description="Polar residues" evidence="8">
    <location>
        <begin position="1489"/>
        <end position="1533"/>
    </location>
</feature>
<feature type="compositionally biased region" description="Polar residues" evidence="8">
    <location>
        <begin position="1540"/>
        <end position="1550"/>
    </location>
</feature>
<feature type="compositionally biased region" description="Polar residues" evidence="8">
    <location>
        <begin position="1557"/>
        <end position="1582"/>
    </location>
</feature>
<feature type="compositionally biased region" description="Polar residues" evidence="8">
    <location>
        <begin position="1588"/>
        <end position="1614"/>
    </location>
</feature>
<feature type="compositionally biased region" description="Low complexity" evidence="8">
    <location>
        <begin position="1620"/>
        <end position="1631"/>
    </location>
</feature>
<feature type="compositionally biased region" description="Polar residues" evidence="8">
    <location>
        <begin position="1633"/>
        <end position="1661"/>
    </location>
</feature>
<feature type="compositionally biased region" description="Low complexity" evidence="8">
    <location>
        <begin position="1668"/>
        <end position="1679"/>
    </location>
</feature>
<feature type="compositionally biased region" description="Polar residues" evidence="8">
    <location>
        <begin position="1701"/>
        <end position="1741"/>
    </location>
</feature>
<feature type="compositionally biased region" description="Polar residues" evidence="8">
    <location>
        <begin position="1749"/>
        <end position="1773"/>
    </location>
</feature>
<feature type="compositionally biased region" description="Polar residues" evidence="8">
    <location>
        <begin position="1812"/>
        <end position="1822"/>
    </location>
</feature>
<feature type="compositionally biased region" description="Low complexity" evidence="8">
    <location>
        <begin position="1828"/>
        <end position="1840"/>
    </location>
</feature>
<feature type="compositionally biased region" description="Polar residues" evidence="8">
    <location>
        <begin position="1841"/>
        <end position="1864"/>
    </location>
</feature>
<feature type="compositionally biased region" description="Polar residues" evidence="8">
    <location>
        <begin position="1892"/>
        <end position="1902"/>
    </location>
</feature>
<feature type="compositionally biased region" description="Polar residues" evidence="8">
    <location>
        <begin position="1909"/>
        <end position="1950"/>
    </location>
</feature>
<feature type="compositionally biased region" description="Polar residues" evidence="8">
    <location>
        <begin position="1957"/>
        <end position="1981"/>
    </location>
</feature>
<feature type="compositionally biased region" description="Polar residues" evidence="8">
    <location>
        <begin position="2004"/>
        <end position="2030"/>
    </location>
</feature>
<feature type="compositionally biased region" description="Polar residues" evidence="8">
    <location>
        <begin position="2036"/>
        <end position="2077"/>
    </location>
</feature>
<feature type="compositionally biased region" description="Low complexity" evidence="8">
    <location>
        <begin position="2125"/>
        <end position="2146"/>
    </location>
</feature>
<feature type="compositionally biased region" description="Polar residues" evidence="8">
    <location>
        <begin position="2148"/>
        <end position="2189"/>
    </location>
</feature>
<feature type="compositionally biased region" description="Polar residues" evidence="8">
    <location>
        <begin position="2196"/>
        <end position="2219"/>
    </location>
</feature>
<feature type="compositionally biased region" description="Polar residues" evidence="8">
    <location>
        <begin position="2232"/>
        <end position="2254"/>
    </location>
</feature>
<feature type="compositionally biased region" description="Polar residues" evidence="8">
    <location>
        <begin position="2261"/>
        <end position="2270"/>
    </location>
</feature>
<feature type="compositionally biased region" description="Low complexity" evidence="8">
    <location>
        <begin position="2271"/>
        <end position="2283"/>
    </location>
</feature>
<feature type="compositionally biased region" description="Polar residues" evidence="8">
    <location>
        <begin position="2284"/>
        <end position="2301"/>
    </location>
</feature>
<feature type="compositionally biased region" description="Polar residues" evidence="8">
    <location>
        <begin position="2309"/>
        <end position="2349"/>
    </location>
</feature>
<feature type="compositionally biased region" description="Low complexity" evidence="8">
    <location>
        <begin position="2366"/>
        <end position="2399"/>
    </location>
</feature>
<feature type="compositionally biased region" description="Polar residues" evidence="8">
    <location>
        <begin position="2404"/>
        <end position="2413"/>
    </location>
</feature>
<feature type="compositionally biased region" description="Polar residues" evidence="8">
    <location>
        <begin position="2421"/>
        <end position="2445"/>
    </location>
</feature>
<feature type="compositionally biased region" description="Low complexity" evidence="8">
    <location>
        <begin position="2452"/>
        <end position="2471"/>
    </location>
</feature>
<feature type="compositionally biased region" description="Polar residues" evidence="8">
    <location>
        <begin position="2485"/>
        <end position="2510"/>
    </location>
</feature>
<feature type="compositionally biased region" description="Polar residues" evidence="8">
    <location>
        <begin position="2517"/>
        <end position="2573"/>
    </location>
</feature>
<feature type="compositionally biased region" description="Low complexity" evidence="8">
    <location>
        <begin position="2580"/>
        <end position="2591"/>
    </location>
</feature>
<feature type="compositionally biased region" description="Polar residues" evidence="8">
    <location>
        <begin position="2597"/>
        <end position="2637"/>
    </location>
</feature>
<feature type="compositionally biased region" description="Polar residues" evidence="8">
    <location>
        <begin position="2645"/>
        <end position="2691"/>
    </location>
</feature>
<feature type="compositionally biased region" description="Low complexity" evidence="8">
    <location>
        <begin position="2692"/>
        <end position="2704"/>
    </location>
</feature>
<feature type="compositionally biased region" description="Polar residues" evidence="8">
    <location>
        <begin position="2705"/>
        <end position="2723"/>
    </location>
</feature>
<feature type="compositionally biased region" description="Low complexity" evidence="8">
    <location>
        <begin position="2724"/>
        <end position="2735"/>
    </location>
</feature>
<feature type="compositionally biased region" description="Polar residues" evidence="8">
    <location>
        <begin position="2740"/>
        <end position="2750"/>
    </location>
</feature>
<feature type="compositionally biased region" description="Polar residues" evidence="8">
    <location>
        <begin position="2756"/>
        <end position="2798"/>
    </location>
</feature>
<feature type="compositionally biased region" description="Polar residues" evidence="8">
    <location>
        <begin position="2805"/>
        <end position="2814"/>
    </location>
</feature>
<feature type="compositionally biased region" description="Polar residues" evidence="8">
    <location>
        <begin position="2837"/>
        <end position="2846"/>
    </location>
</feature>
<feature type="compositionally biased region" description="Polar residues" evidence="8">
    <location>
        <begin position="2853"/>
        <end position="2877"/>
    </location>
</feature>
<feature type="compositionally biased region" description="Low complexity" evidence="8">
    <location>
        <begin position="2895"/>
        <end position="2907"/>
    </location>
</feature>
<feature type="compositionally biased region" description="Polar residues" evidence="8">
    <location>
        <begin position="2916"/>
        <end position="2942"/>
    </location>
</feature>
<feature type="compositionally biased region" description="Polar residues" evidence="8">
    <location>
        <begin position="2948"/>
        <end position="2973"/>
    </location>
</feature>
<feature type="compositionally biased region" description="Polar residues" evidence="8">
    <location>
        <begin position="2980"/>
        <end position="2989"/>
    </location>
</feature>
<feature type="compositionally biased region" description="Polar residues" evidence="8">
    <location>
        <begin position="3009"/>
        <end position="3037"/>
    </location>
</feature>
<feature type="compositionally biased region" description="Polar residues" evidence="8">
    <location>
        <begin position="3044"/>
        <end position="3069"/>
    </location>
</feature>
<feature type="compositionally biased region" description="Polar residues" evidence="8">
    <location>
        <begin position="3076"/>
        <end position="3118"/>
    </location>
</feature>
<feature type="compositionally biased region" description="Polar residues" evidence="8">
    <location>
        <begin position="3124"/>
        <end position="3134"/>
    </location>
</feature>
<feature type="compositionally biased region" description="Low complexity" evidence="8">
    <location>
        <begin position="3140"/>
        <end position="3151"/>
    </location>
</feature>
<feature type="compositionally biased region" description="Polar residues" evidence="8">
    <location>
        <begin position="3156"/>
        <end position="3197"/>
    </location>
</feature>
<feature type="compositionally biased region" description="Polar residues" evidence="8">
    <location>
        <begin position="3205"/>
        <end position="3251"/>
    </location>
</feature>
<feature type="compositionally biased region" description="Low complexity" evidence="8">
    <location>
        <begin position="3252"/>
        <end position="3264"/>
    </location>
</feature>
<feature type="compositionally biased region" description="Polar residues" evidence="8">
    <location>
        <begin position="3265"/>
        <end position="3283"/>
    </location>
</feature>
<feature type="compositionally biased region" description="Low complexity" evidence="8">
    <location>
        <begin position="3284"/>
        <end position="3295"/>
    </location>
</feature>
<feature type="compositionally biased region" description="Polar residues" evidence="8">
    <location>
        <begin position="3320"/>
        <end position="3337"/>
    </location>
</feature>
<feature type="compositionally biased region" description="Low complexity" evidence="8">
    <location>
        <begin position="3338"/>
        <end position="3356"/>
    </location>
</feature>
<feature type="compositionally biased region" description="Polar residues" evidence="8">
    <location>
        <begin position="3365"/>
        <end position="3374"/>
    </location>
</feature>
<feature type="compositionally biased region" description="Polar residues" evidence="8">
    <location>
        <begin position="3381"/>
        <end position="3405"/>
    </location>
</feature>
<feature type="compositionally biased region" description="Polar residues" evidence="8">
    <location>
        <begin position="3412"/>
        <end position="3421"/>
    </location>
</feature>
<feature type="compositionally biased region" description="Low complexity" evidence="8">
    <location>
        <begin position="3428"/>
        <end position="3471"/>
    </location>
</feature>
<feature type="compositionally biased region" description="Polar residues" evidence="8">
    <location>
        <begin position="3473"/>
        <end position="3486"/>
    </location>
</feature>
<feature type="compositionally biased region" description="Polar residues" evidence="8">
    <location>
        <begin position="3493"/>
        <end position="3517"/>
    </location>
</feature>
<feature type="compositionally biased region" description="Polar residues" evidence="8">
    <location>
        <begin position="3524"/>
        <end position="3550"/>
    </location>
</feature>
<feature type="compositionally biased region" description="Polar residues" evidence="8">
    <location>
        <begin position="3557"/>
        <end position="3580"/>
    </location>
</feature>
<feature type="compositionally biased region" description="Low complexity" evidence="8">
    <location>
        <begin position="3604"/>
        <end position="3615"/>
    </location>
</feature>
<feature type="compositionally biased region" description="Polar residues" evidence="8">
    <location>
        <begin position="3620"/>
        <end position="3644"/>
    </location>
</feature>
<feature type="compositionally biased region" description="Low complexity" evidence="8">
    <location>
        <begin position="3668"/>
        <end position="3679"/>
    </location>
</feature>
<feature type="compositionally biased region" description="Polar residues" evidence="8">
    <location>
        <begin position="3684"/>
        <end position="3694"/>
    </location>
</feature>
<feature type="compositionally biased region" description="Low complexity" evidence="8">
    <location>
        <begin position="3710"/>
        <end position="3728"/>
    </location>
</feature>
<feature type="compositionally biased region" description="Polar residues" evidence="8">
    <location>
        <begin position="3730"/>
        <end position="3741"/>
    </location>
</feature>
<feature type="compositionally biased region" description="Low complexity" evidence="8">
    <location>
        <begin position="3780"/>
        <end position="3791"/>
    </location>
</feature>
<feature type="compositionally biased region" description="Polar residues" evidence="8">
    <location>
        <begin position="3796"/>
        <end position="3822"/>
    </location>
</feature>
<feature type="compositionally biased region" description="Polar residues" evidence="8">
    <location>
        <begin position="3860"/>
        <end position="3869"/>
    </location>
</feature>
<feature type="compositionally biased region" description="Polar residues" evidence="8">
    <location>
        <begin position="3877"/>
        <end position="3886"/>
    </location>
</feature>
<feature type="compositionally biased region" description="Polar residues" evidence="8">
    <location>
        <begin position="3892"/>
        <end position="3901"/>
    </location>
</feature>
<feature type="compositionally biased region" description="Low complexity" evidence="8">
    <location>
        <begin position="3940"/>
        <end position="3951"/>
    </location>
</feature>
<feature type="compositionally biased region" description="Polar residues" evidence="8">
    <location>
        <begin position="3956"/>
        <end position="3981"/>
    </location>
</feature>
<feature type="compositionally biased region" description="Polar residues" evidence="8">
    <location>
        <begin position="3988"/>
        <end position="3997"/>
    </location>
</feature>
<feature type="compositionally biased region" description="Low complexity" evidence="8">
    <location>
        <begin position="3999"/>
        <end position="4011"/>
    </location>
</feature>
<feature type="compositionally biased region" description="Polar residues" evidence="8">
    <location>
        <begin position="4018"/>
        <end position="4029"/>
    </location>
</feature>
<feature type="compositionally biased region" description="Low complexity" evidence="8">
    <location>
        <begin position="4030"/>
        <end position="4047"/>
    </location>
</feature>
<feature type="compositionally biased region" description="Polar residues" evidence="8">
    <location>
        <begin position="4049"/>
        <end position="4093"/>
    </location>
</feature>
<feature type="compositionally biased region" description="Low complexity" evidence="8">
    <location>
        <begin position="4095"/>
        <end position="4107"/>
    </location>
</feature>
<feature type="compositionally biased region" description="Polar residues" evidence="8">
    <location>
        <begin position="4116"/>
        <end position="4142"/>
    </location>
</feature>
<feature type="compositionally biased region" description="Polar residues" evidence="8">
    <location>
        <begin position="4149"/>
        <end position="4173"/>
    </location>
</feature>
<feature type="compositionally biased region" description="Low complexity" evidence="8">
    <location>
        <begin position="4180"/>
        <end position="4191"/>
    </location>
</feature>
<feature type="compositionally biased region" description="Polar residues" evidence="8">
    <location>
        <begin position="4196"/>
        <end position="4205"/>
    </location>
</feature>
<feature type="compositionally biased region" description="Polar residues" evidence="8">
    <location>
        <begin position="4212"/>
        <end position="4223"/>
    </location>
</feature>
<feature type="compositionally biased region" description="Low complexity" evidence="8">
    <location>
        <begin position="4242"/>
        <end position="4254"/>
    </location>
</feature>
<feature type="site" description="Cleavage" evidence="20">
    <location>
        <begin position="4687"/>
        <end position="4688"/>
    </location>
</feature>
<feature type="glycosylation site" description="O-linked (GalNAc...) threonine" evidence="2">
    <location>
        <position position="154"/>
    </location>
</feature>
<feature type="glycosylation site" description="O-linked (GalNAc...) threonine" evidence="2">
    <location>
        <position position="156"/>
    </location>
</feature>
<feature type="glycosylation site" description="N-linked (GlcNAc...) asparagine" evidence="5">
    <location>
        <position position="230"/>
    </location>
</feature>
<feature type="glycosylation site" description="O-linked (GalNAc...) threonine" evidence="2">
    <location>
        <position position="234"/>
    </location>
</feature>
<feature type="glycosylation site" description="N-linked (GlcNAc...) asparagine" evidence="5">
    <location>
        <position position="255"/>
    </location>
</feature>
<feature type="glycosylation site" description="O-linked (GalNAc...) threonine" evidence="2">
    <location>
        <position position="364"/>
    </location>
</feature>
<feature type="glycosylation site" description="O-linked (GalNAc...) threonine" evidence="2">
    <location>
        <position position="369"/>
    </location>
</feature>
<feature type="glycosylation site" description="O-linked (GalNAc...) threonine" evidence="2">
    <location>
        <position position="376"/>
    </location>
</feature>
<feature type="glycosylation site" description="N-linked (GlcNAc...) asparagine" evidence="5">
    <location>
        <position position="617"/>
    </location>
</feature>
<feature type="glycosylation site" description="O-linked (GalNAc...) threonine" evidence="2">
    <location>
        <position position="620"/>
    </location>
</feature>
<feature type="glycosylation site" description="O-linked (GalNAc...) threonine" evidence="2">
    <location>
        <position position="666"/>
    </location>
</feature>
<feature type="glycosylation site" description="O-linked (GalNAc...) threonine" evidence="2">
    <location>
        <position position="688"/>
    </location>
</feature>
<feature type="glycosylation site" description="O-linked (GalNAc...) threonine" evidence="2">
    <location>
        <position position="747"/>
    </location>
</feature>
<feature type="glycosylation site" description="O-linked (GalNAc...) threonine" evidence="2">
    <location>
        <position position="797"/>
    </location>
</feature>
<feature type="glycosylation site" description="O-linked (GalNAc...) threonine" evidence="2">
    <location>
        <position position="798"/>
    </location>
</feature>
<feature type="glycosylation site" description="O-linked (GalNAc...) threonine" evidence="2">
    <location>
        <position position="802"/>
    </location>
</feature>
<feature type="glycosylation site" description="O-linked (GalNAc...) threonine" evidence="2">
    <location>
        <position position="804"/>
    </location>
</feature>
<feature type="glycosylation site" description="O-linked (GalNAc...) threonine" evidence="2">
    <location>
        <position position="813"/>
    </location>
</feature>
<feature type="glycosylation site" description="O-linked (GalNAc...) threonine" evidence="2">
    <location>
        <position position="814"/>
    </location>
</feature>
<feature type="glycosylation site" description="O-linked (GalNAc...) threonine" evidence="2">
    <location>
        <position position="881"/>
    </location>
</feature>
<feature type="glycosylation site" description="O-linked (GalNAc...) threonine" evidence="2">
    <location>
        <position position="886"/>
    </location>
</feature>
<feature type="glycosylation site" description="O-linked (GalNAc...) threonine" evidence="2">
    <location>
        <position position="892"/>
    </location>
</feature>
<feature type="glycosylation site" description="O-linked (GalNAc...) threonine" evidence="2">
    <location>
        <position position="931"/>
    </location>
</feature>
<feature type="glycosylation site" description="O-linked (GalNAc...) threonine" evidence="2">
    <location>
        <position position="934"/>
    </location>
</feature>
<feature type="glycosylation site" description="O-linked (GalNAc...) threonine" evidence="2">
    <location>
        <position position="938"/>
    </location>
</feature>
<feature type="glycosylation site" description="O-linked (GalNAc...) threonine" evidence="2">
    <location>
        <position position="943"/>
    </location>
</feature>
<feature type="glycosylation site" description="O-linked (GalNAc...) threonine" evidence="2">
    <location>
        <position position="945"/>
    </location>
</feature>
<feature type="glycosylation site" description="O-linked (GalNAc...) threonine" evidence="2">
    <location>
        <position position="948"/>
    </location>
</feature>
<feature type="glycosylation site" description="O-linked (GalNAc...) threonine" evidence="2">
    <location>
        <position position="952"/>
    </location>
</feature>
<feature type="glycosylation site" description="O-linked (GalNAc...) threonine" evidence="2">
    <location>
        <position position="954"/>
    </location>
</feature>
<feature type="glycosylation site" description="O-linked (GalNAc...) threonine" evidence="2">
    <location>
        <position position="1003"/>
    </location>
</feature>
<feature type="glycosylation site" description="O-linked (GalNAc...) threonine" evidence="2">
    <location>
        <position position="1007"/>
    </location>
</feature>
<feature type="glycosylation site" description="O-linked (GalNAc...) threonine" evidence="2">
    <location>
        <position position="1012"/>
    </location>
</feature>
<feature type="glycosylation site" description="O-linked (GalNAc...) threonine" evidence="2">
    <location>
        <position position="1019"/>
    </location>
</feature>
<feature type="glycosylation site" description="O-linked (GalNAc...) threonine" evidence="2">
    <location>
        <position position="1022"/>
    </location>
</feature>
<feature type="glycosylation site" description="O-linked (GalNAc...) threonine" evidence="2">
    <location>
        <position position="1023"/>
    </location>
</feature>
<feature type="glycosylation site" description="O-linked (GalNAc...) threonine" evidence="2">
    <location>
        <position position="1028"/>
    </location>
</feature>
<feature type="glycosylation site" description="O-linked (GalNAc...) threonine" evidence="2">
    <location>
        <position position="1030"/>
    </location>
</feature>
<feature type="glycosylation site" description="O-linked (GalNAc...) threonine" evidence="2">
    <location>
        <position position="1035"/>
    </location>
</feature>
<feature type="glycosylation site" description="O-linked (GalNAc...) threonine" evidence="2">
    <location>
        <position position="1039"/>
    </location>
</feature>
<feature type="glycosylation site" description="O-linked (GalNAc...) threonine" evidence="2">
    <location>
        <position position="1044"/>
    </location>
</feature>
<feature type="glycosylation site" description="O-linked (GalNAc...) threonine" evidence="2">
    <location>
        <position position="1051"/>
    </location>
</feature>
<feature type="glycosylation site" description="O-linked (GalNAc...) threonine" evidence="2">
    <location>
        <position position="1055"/>
    </location>
</feature>
<feature type="glycosylation site" description="O-linked (GalNAc...) threonine" evidence="2">
    <location>
        <position position="1060"/>
    </location>
</feature>
<feature type="glycosylation site" description="O-linked (GalNAc...) threonine" evidence="2">
    <location>
        <position position="1062"/>
    </location>
</feature>
<feature type="glycosylation site" description="O-linked (GalNAc...) threonine" evidence="2">
    <location>
        <position position="1067"/>
    </location>
</feature>
<feature type="glycosylation site" description="O-linked (GalNAc...) threonine" evidence="2">
    <location>
        <position position="1071"/>
    </location>
</feature>
<feature type="glycosylation site" description="O-linked (GalNAc...) threonine" evidence="2">
    <location>
        <position position="1076"/>
    </location>
</feature>
<feature type="glycosylation site" description="O-linked (GalNAc...) threonine" evidence="2">
    <location>
        <position position="1083"/>
    </location>
</feature>
<feature type="glycosylation site" description="O-linked (GalNAc...) threonine" evidence="2">
    <location>
        <position position="1086"/>
    </location>
</feature>
<feature type="glycosylation site" description="O-linked (GalNAc...) threonine" evidence="2">
    <location>
        <position position="1087"/>
    </location>
</feature>
<feature type="glycosylation site" description="O-linked (GalNAc...) threonine" evidence="2">
    <location>
        <position position="1092"/>
    </location>
</feature>
<feature type="glycosylation site" description="O-linked (GalNAc...) threonine" evidence="2">
    <location>
        <position position="1094"/>
    </location>
</feature>
<feature type="glycosylation site" description="O-linked (GalNAc...) threonine" evidence="2">
    <location>
        <position position="1099"/>
    </location>
</feature>
<feature type="glycosylation site" description="O-linked (GalNAc...) threonine" evidence="2">
    <location>
        <position position="1103"/>
    </location>
</feature>
<feature type="glycosylation site" description="O-linked (GalNAc...) threonine" evidence="2">
    <location>
        <position position="1108"/>
    </location>
</feature>
<feature type="glycosylation site" description="O-linked (GalNAc...) threonine" evidence="2">
    <location>
        <position position="1110"/>
    </location>
</feature>
<feature type="glycosylation site" description="O-linked (GalNAc...) threonine" evidence="2">
    <location>
        <position position="1115"/>
    </location>
</feature>
<feature type="glycosylation site" description="O-linked (GalNAc...) threonine" evidence="2">
    <location>
        <position position="1118"/>
    </location>
</feature>
<feature type="glycosylation site" description="O-linked (GalNAc...) threonine" evidence="2">
    <location>
        <position position="1119"/>
    </location>
</feature>
<feature type="glycosylation site" description="O-linked (GalNAc...) threonine" evidence="2">
    <location>
        <position position="1124"/>
    </location>
</feature>
<feature type="glycosylation site" description="O-linked (GalNAc...) threonine" evidence="2">
    <location>
        <position position="1126"/>
    </location>
</feature>
<feature type="glycosylation site" description="O-linked (GalNAc...) threonine" evidence="2">
    <location>
        <position position="1131"/>
    </location>
</feature>
<feature type="glycosylation site" description="O-linked (GalNAc...) threonine" evidence="2">
    <location>
        <position position="1135"/>
    </location>
</feature>
<feature type="glycosylation site" description="O-linked (GalNAc...) threonine" evidence="2">
    <location>
        <position position="1172"/>
    </location>
</feature>
<feature type="glycosylation site" description="O-linked (GalNAc...) threonine" evidence="2">
    <location>
        <position position="1179"/>
    </location>
</feature>
<feature type="glycosylation site" description="O-linked (GalNAc...) threonine" evidence="2">
    <location>
        <position position="1182"/>
    </location>
</feature>
<feature type="glycosylation site" description="O-linked (GalNAc...) threonine" evidence="2">
    <location>
        <position position="1183"/>
    </location>
</feature>
<feature type="glycosylation site" description="O-linked (GalNAc...) threonine" evidence="2">
    <location>
        <position position="1188"/>
    </location>
</feature>
<feature type="glycosylation site" description="O-linked (GalNAc...) threonine" evidence="2">
    <location>
        <position position="1195"/>
    </location>
</feature>
<feature type="glycosylation site" description="O-linked (GalNAc...) threonine" evidence="2">
    <location>
        <position position="1199"/>
    </location>
</feature>
<feature type="glycosylation site" description="O-linked (GalNAc...) threonine" evidence="2">
    <location>
        <position position="1204"/>
    </location>
</feature>
<feature type="glycosylation site" description="O-linked (GalNAc...) threonine" evidence="2">
    <location>
        <position position="1236"/>
    </location>
</feature>
<feature type="glycosylation site" description="O-linked (GalNAc...) threonine" evidence="2">
    <location>
        <position position="1243"/>
    </location>
</feature>
<feature type="glycosylation site" description="O-linked (GalNAc...) threonine" evidence="2">
    <location>
        <position position="1246"/>
    </location>
</feature>
<feature type="glycosylation site" description="O-linked (GalNAc...) threonine" evidence="2">
    <location>
        <position position="1247"/>
    </location>
</feature>
<feature type="glycosylation site" description="O-linked (GalNAc...) threonine" evidence="2">
    <location>
        <position position="1278"/>
    </location>
</feature>
<feature type="glycosylation site" description="O-linked (GalNAc...) threonine" evidence="2">
    <location>
        <position position="1279"/>
    </location>
</feature>
<feature type="glycosylation site" description="O-linked (GalNAc...) threonine" evidence="2">
    <location>
        <position position="1284"/>
    </location>
</feature>
<feature type="glycosylation site" description="O-linked (GalNAc...) threonine" evidence="2">
    <location>
        <position position="1286"/>
    </location>
</feature>
<feature type="glycosylation site" description="O-linked (GalNAc...) threonine" evidence="2">
    <location>
        <position position="1291"/>
    </location>
</feature>
<feature type="glycosylation site" description="O-linked (GalNAc...) threonine" evidence="2">
    <location>
        <position position="1295"/>
    </location>
</feature>
<feature type="glycosylation site" description="O-linked (GalNAc...) threonine" evidence="2">
    <location>
        <position position="1300"/>
    </location>
</feature>
<feature type="glycosylation site" description="O-linked (GalNAc...) threonine" evidence="2">
    <location>
        <position position="1307"/>
    </location>
</feature>
<feature type="glycosylation site" description="O-linked (GalNAc...) threonine" evidence="2">
    <location>
        <position position="1311"/>
    </location>
</feature>
<feature type="glycosylation site" description="O-linked (GalNAc...) threonine" evidence="2">
    <location>
        <position position="1316"/>
    </location>
</feature>
<feature type="glycosylation site" description="O-linked (GalNAc...) threonine" evidence="2">
    <location>
        <position position="1323"/>
    </location>
</feature>
<feature type="glycosylation site" description="O-linked (GalNAc...) threonine" evidence="2">
    <location>
        <position position="1326"/>
    </location>
</feature>
<feature type="glycosylation site" description="O-linked (GalNAc...) threonine" evidence="2">
    <location>
        <position position="1332"/>
    </location>
</feature>
<feature type="glycosylation site" description="O-linked (GalNAc...) threonine" evidence="2">
    <location>
        <position position="1339"/>
    </location>
</feature>
<feature type="glycosylation site" description="O-linked (GalNAc...) threonine" evidence="2">
    <location>
        <position position="1342"/>
    </location>
</feature>
<feature type="glycosylation site" description="O-linked (GalNAc...) threonine" evidence="2">
    <location>
        <position position="1343"/>
    </location>
</feature>
<feature type="glycosylation site" description="O-linked (GalNAc...) threonine" evidence="2">
    <location>
        <position position="1348"/>
    </location>
</feature>
<feature type="glycosylation site" description="O-linked (GalNAc...) threonine" evidence="2">
    <location>
        <position position="1380"/>
    </location>
</feature>
<feature type="glycosylation site" description="O-linked (GalNAc...) threonine" evidence="2">
    <location>
        <position position="1387"/>
    </location>
</feature>
<feature type="glycosylation site" description="O-linked (GalNAc...) threonine" evidence="2">
    <location>
        <position position="1390"/>
    </location>
</feature>
<feature type="glycosylation site" description="O-linked (GalNAc...) threonine" evidence="2">
    <location>
        <position position="1391"/>
    </location>
</feature>
<feature type="glycosylation site" description="O-linked (GalNAc...) threonine" evidence="2">
    <location>
        <position position="1396"/>
    </location>
</feature>
<feature type="glycosylation site" description="O-linked (GalNAc...) threonine" evidence="2">
    <location>
        <position position="1403"/>
    </location>
</feature>
<feature type="glycosylation site" description="O-linked (GalNAc...) threonine" evidence="2">
    <location>
        <position position="1407"/>
    </location>
</feature>
<feature type="glycosylation site" description="O-linked (GalNAc...) threonine" evidence="2">
    <location>
        <position position="1412"/>
    </location>
</feature>
<feature type="glycosylation site" description="O-linked (GalNAc...) threonine" evidence="2">
    <location>
        <position position="1444"/>
    </location>
</feature>
<feature type="glycosylation site" description="O-linked (GalNAc...) threonine" evidence="2">
    <location>
        <position position="1451"/>
    </location>
</feature>
<feature type="glycosylation site" description="O-linked (GalNAc...) threonine" evidence="2">
    <location>
        <position position="1454"/>
    </location>
</feature>
<feature type="glycosylation site" description="O-linked (GalNAc...) threonine" evidence="2">
    <location>
        <position position="1455"/>
    </location>
</feature>
<feature type="glycosylation site" description="O-linked (GalNAc...) threonine" evidence="2">
    <location>
        <position position="1486"/>
    </location>
</feature>
<feature type="glycosylation site" description="O-linked (GalNAc...) threonine" evidence="2">
    <location>
        <position position="1487"/>
    </location>
</feature>
<feature type="glycosylation site" description="O-linked (GalNAc...) threonine" evidence="2">
    <location>
        <position position="1492"/>
    </location>
</feature>
<feature type="glycosylation site" description="O-linked (GalNAc...) threonine" evidence="2">
    <location>
        <position position="1494"/>
    </location>
</feature>
<feature type="glycosylation site" description="O-linked (GalNAc...) threonine" evidence="2">
    <location>
        <position position="1499"/>
    </location>
</feature>
<feature type="glycosylation site" description="O-linked (GalNAc...) threonine" evidence="2">
    <location>
        <position position="1503"/>
    </location>
</feature>
<feature type="glycosylation site" description="O-linked (GalNAc...) threonine" evidence="2">
    <location>
        <position position="1508"/>
    </location>
</feature>
<feature type="glycosylation site" description="O-linked (GalNAc...) threonine" evidence="2">
    <location>
        <position position="1515"/>
    </location>
</feature>
<feature type="glycosylation site" description="O-linked (GalNAc...) threonine" evidence="2">
    <location>
        <position position="1519"/>
    </location>
</feature>
<feature type="glycosylation site" description="O-linked (GalNAc...) threonine" evidence="2">
    <location>
        <position position="1524"/>
    </location>
</feature>
<feature type="glycosylation site" description="O-linked (GalNAc...) threonine" evidence="2">
    <location>
        <position position="1531"/>
    </location>
</feature>
<feature type="glycosylation site" description="O-linked (GalNAc...) threonine" evidence="2">
    <location>
        <position position="1534"/>
    </location>
</feature>
<feature type="glycosylation site" description="O-linked (GalNAc...) threonine" evidence="2">
    <location>
        <position position="1540"/>
    </location>
</feature>
<feature type="glycosylation site" description="O-linked (GalNAc...) threonine" evidence="2">
    <location>
        <position position="1547"/>
    </location>
</feature>
<feature type="glycosylation site" description="O-linked (GalNAc...) threonine" evidence="2">
    <location>
        <position position="1550"/>
    </location>
</feature>
<feature type="glycosylation site" description="O-linked (GalNAc...) threonine" evidence="2">
    <location>
        <position position="1551"/>
    </location>
</feature>
<feature type="glycosylation site" description="O-linked (GalNAc...) threonine" evidence="2">
    <location>
        <position position="1556"/>
    </location>
</feature>
<feature type="glycosylation site" description="O-linked (GalNAc...) threonine" evidence="2">
    <location>
        <position position="1563"/>
    </location>
</feature>
<feature type="glycosylation site" description="O-linked (GalNAc...) threonine" evidence="2">
    <location>
        <position position="1566"/>
    </location>
</feature>
<feature type="glycosylation site" description="O-linked (GalNAc...) threonine" evidence="2">
    <location>
        <position position="1567"/>
    </location>
</feature>
<feature type="glycosylation site" description="O-linked (GalNAc...) threonine" evidence="2">
    <location>
        <position position="1572"/>
    </location>
</feature>
<feature type="glycosylation site" description="O-linked (GalNAc...) threonine" evidence="2">
    <location>
        <position position="1579"/>
    </location>
</feature>
<feature type="glycosylation site" description="O-linked (GalNAc...) threonine" evidence="2">
    <location>
        <position position="1582"/>
    </location>
</feature>
<feature type="glycosylation site" description="O-linked (GalNAc...) threonine" evidence="2">
    <location>
        <position position="1583"/>
    </location>
</feature>
<feature type="glycosylation site" description="O-linked (GalNAc...) threonine" evidence="2">
    <location>
        <position position="1588"/>
    </location>
</feature>
<feature type="glycosylation site" description="O-linked (GalNAc...) threonine" evidence="2">
    <location>
        <position position="1590"/>
    </location>
</feature>
<feature type="glycosylation site" description="O-linked (GalNAc...) threonine" evidence="2">
    <location>
        <position position="1598"/>
    </location>
</feature>
<feature type="glycosylation site" description="O-linked (GalNAc...) threonine" evidence="2">
    <location>
        <position position="1599"/>
    </location>
</feature>
<feature type="glycosylation site" description="O-linked (GalNAc...) threonine" evidence="2">
    <location>
        <position position="1604"/>
    </location>
</feature>
<feature type="glycosylation site" description="O-linked (GalNAc...) threonine" evidence="2">
    <location>
        <position position="1611"/>
    </location>
</feature>
<feature type="glycosylation site" description="O-linked (GalNAc...) threonine" evidence="2">
    <location>
        <position position="1614"/>
    </location>
</feature>
<feature type="glycosylation site" description="O-linked (GalNAc...) threonine" evidence="2">
    <location>
        <position position="1615"/>
    </location>
</feature>
<feature type="glycosylation site" description="O-linked (GalNAc...) threonine" evidence="2">
    <location>
        <position position="1620"/>
    </location>
</feature>
<feature type="glycosylation site" description="O-linked (GalNAc...) threonine" evidence="2">
    <location>
        <position position="1622"/>
    </location>
</feature>
<feature type="glycosylation site" description="O-linked (GalNAc...) threonine" evidence="2">
    <location>
        <position position="1627"/>
    </location>
</feature>
<feature type="glycosylation site" description="O-linked (GalNAc...) threonine" evidence="2">
    <location>
        <position position="1630"/>
    </location>
</feature>
<feature type="glycosylation site" description="N-linked (GlcNAc...) asparagine" evidence="5">
    <location>
        <position position="1637"/>
    </location>
</feature>
<feature type="glycosylation site" description="O-linked (GalNAc...) threonine" evidence="2">
    <location>
        <position position="1659"/>
    </location>
</feature>
<feature type="glycosylation site" description="O-linked (GalNAc...) threonine" evidence="2">
    <location>
        <position position="1663"/>
    </location>
</feature>
<feature type="glycosylation site" description="O-linked (GalNAc...) threonine" evidence="2">
    <location>
        <position position="1668"/>
    </location>
</feature>
<feature type="glycosylation site" description="O-linked (GalNAc...) threonine" evidence="2">
    <location>
        <position position="1670"/>
    </location>
</feature>
<feature type="glycosylation site" description="O-linked (GalNAc...) threonine" evidence="2">
    <location>
        <position position="1675"/>
    </location>
</feature>
<feature type="glycosylation site" description="O-linked (GalNAc...) threonine" evidence="2">
    <location>
        <position position="1679"/>
    </location>
</feature>
<feature type="glycosylation site" description="O-linked (GalNAc...) threonine" evidence="2">
    <location>
        <position position="1716"/>
    </location>
</feature>
<feature type="glycosylation site" description="O-linked (GalNAc...) threonine" evidence="2">
    <location>
        <position position="1723"/>
    </location>
</feature>
<feature type="glycosylation site" description="O-linked (GalNAc...) threonine" evidence="2">
    <location>
        <position position="1726"/>
    </location>
</feature>
<feature type="glycosylation site" description="O-linked (GalNAc...) threonine" evidence="2">
    <location>
        <position position="1727"/>
    </location>
</feature>
<feature type="glycosylation site" description="O-linked (GalNAc...) threonine" evidence="2">
    <location>
        <position position="1732"/>
    </location>
</feature>
<feature type="glycosylation site" description="O-linked (GalNAc...) threonine" evidence="2">
    <location>
        <position position="1764"/>
    </location>
</feature>
<feature type="glycosylation site" description="O-linked (GalNAc...) threonine" evidence="2">
    <location>
        <position position="1766"/>
    </location>
</feature>
<feature type="glycosylation site" description="O-linked (GalNAc...) threonine" evidence="2">
    <location>
        <position position="1812"/>
    </location>
</feature>
<feature type="glycosylation site" description="O-linked (GalNAc...) threonine" evidence="2">
    <location>
        <position position="1819"/>
    </location>
</feature>
<feature type="glycosylation site" description="O-linked (GalNAc...) threonine" evidence="2">
    <location>
        <position position="1822"/>
    </location>
</feature>
<feature type="glycosylation site" description="O-linked (GalNAc...) threonine" evidence="2">
    <location>
        <position position="1823"/>
    </location>
</feature>
<feature type="glycosylation site" description="O-linked (GalNAc...) threonine" evidence="2">
    <location>
        <position position="1828"/>
    </location>
</feature>
<feature type="glycosylation site" description="O-linked (GalNAc...) threonine" evidence="2">
    <location>
        <position position="1835"/>
    </location>
</feature>
<feature type="glycosylation site" description="O-linked (GalNAc...) threonine" evidence="2">
    <location>
        <position position="1838"/>
    </location>
</feature>
<feature type="glycosylation site" description="O-linked (GalNAc...) threonine" evidence="2">
    <location>
        <position position="1839"/>
    </location>
</feature>
<feature type="glycosylation site" description="O-linked (GalNAc...) threonine" evidence="2">
    <location>
        <position position="1844"/>
    </location>
</feature>
<feature type="glycosylation site" description="O-linked (GalNAc...) threonine" evidence="2">
    <location>
        <position position="1854"/>
    </location>
</feature>
<feature type="glycosylation site" description="O-linked (GalNAc...) threonine" evidence="2">
    <location>
        <position position="1855"/>
    </location>
</feature>
<feature type="glycosylation site" description="O-linked (GalNAc...) threonine" evidence="2">
    <location>
        <position position="1931"/>
    </location>
</feature>
<feature type="glycosylation site" description="O-linked (GalNAc...) threonine" evidence="2">
    <location>
        <position position="1934"/>
    </location>
</feature>
<feature type="glycosylation site" description="O-linked (GalNAc...) threonine" evidence="2">
    <location>
        <position position="1935"/>
    </location>
</feature>
<feature type="glycosylation site" description="O-linked (GalNAc...) threonine" evidence="2">
    <location>
        <position position="1940"/>
    </location>
</feature>
<feature type="glycosylation site" description="O-linked (GalNAc...) threonine" evidence="2">
    <location>
        <position position="1950"/>
    </location>
</feature>
<feature type="glycosylation site" description="O-linked (GalNAc...) threonine" evidence="2">
    <location>
        <position position="1951"/>
    </location>
</feature>
<feature type="glycosylation site" description="O-linked (GalNAc...) threonine" evidence="2">
    <location>
        <position position="1956"/>
    </location>
</feature>
<feature type="glycosylation site" description="O-linked (GalNAc...) threonine" evidence="2">
    <location>
        <position position="1963"/>
    </location>
</feature>
<feature type="glycosylation site" description="O-linked (GalNAc...) threonine" evidence="2">
    <location>
        <position position="1995"/>
    </location>
</feature>
<feature type="glycosylation site" description="O-linked (GalNAc...) threonine" evidence="2">
    <location>
        <position position="1999"/>
    </location>
</feature>
<feature type="glycosylation site" description="O-linked (GalNAc...) threonine" evidence="2">
    <location>
        <position position="2004"/>
    </location>
</feature>
<feature type="glycosylation site" description="O-linked (GalNAc...) threonine" evidence="2">
    <location>
        <position position="2006"/>
    </location>
</feature>
<feature type="glycosylation site" description="O-linked (GalNAc...) threonine" evidence="2">
    <location>
        <position position="2015"/>
    </location>
</feature>
<feature type="glycosylation site" description="O-linked (GalNAc...) threonine" evidence="2">
    <location>
        <position position="2020"/>
    </location>
</feature>
<feature type="glycosylation site" description="O-linked (GalNAc...) threonine" evidence="2">
    <location>
        <position position="2027"/>
    </location>
</feature>
<feature type="glycosylation site" description="O-linked (GalNAc...) threonine" evidence="2">
    <location>
        <position position="2030"/>
    </location>
</feature>
<feature type="glycosylation site" description="O-linked (GalNAc...) threonine" evidence="2">
    <location>
        <position position="2031"/>
    </location>
</feature>
<feature type="glycosylation site" description="O-linked (GalNAc...) threonine" evidence="2">
    <location>
        <position position="2036"/>
    </location>
</feature>
<feature type="glycosylation site" description="O-linked (GalNAc...) threonine" evidence="2">
    <location>
        <position position="2038"/>
    </location>
</feature>
<feature type="glycosylation site" description="O-linked (GalNAc...) threonine" evidence="2">
    <location>
        <position position="2047"/>
    </location>
</feature>
<feature type="glycosylation site" description="O-linked (GalNAc...) threonine" evidence="2">
    <location>
        <position position="2052"/>
    </location>
</feature>
<feature type="glycosylation site" description="O-linked (GalNAc...) threonine" evidence="2">
    <location>
        <position position="2062"/>
    </location>
</feature>
<feature type="glycosylation site" description="O-linked (GalNAc...) threonine" evidence="2">
    <location>
        <position position="2063"/>
    </location>
</feature>
<feature type="glycosylation site" description="O-linked (GalNAc...) threonine" evidence="2">
    <location>
        <position position="2132"/>
    </location>
</feature>
<feature type="glycosylation site" description="O-linked (GalNAc...) threonine" evidence="2">
    <location>
        <position position="2137"/>
    </location>
</feature>
<feature type="glycosylation site" description="O-linked (GalNAc...) threonine" evidence="2">
    <location>
        <position position="2139"/>
    </location>
</feature>
<feature type="glycosylation site" description="O-linked (GalNAc...) threonine" evidence="2">
    <location>
        <position position="2142"/>
    </location>
</feature>
<feature type="glycosylation site" description="O-linked (GalNAc...) threonine" evidence="2">
    <location>
        <position position="2143"/>
    </location>
</feature>
<feature type="glycosylation site" description="O-linked (GalNAc...) threonine" evidence="2">
    <location>
        <position position="2148"/>
    </location>
</feature>
<feature type="glycosylation site" description="O-linked (GalNAc...) threonine" evidence="2">
    <location>
        <position position="2150"/>
    </location>
</feature>
<feature type="glycosylation site" description="O-linked (GalNAc...) threonine" evidence="2">
    <location>
        <position position="2155"/>
    </location>
</feature>
<feature type="glycosylation site" description="O-linked (GalNAc...) threonine" evidence="2">
    <location>
        <position position="2159"/>
    </location>
</feature>
<feature type="glycosylation site" description="O-linked (GalNAc...) threonine" evidence="2">
    <location>
        <position position="2164"/>
    </location>
</feature>
<feature type="glycosylation site" description="O-linked (GalNAc...) threonine" evidence="2">
    <location>
        <position position="2180"/>
    </location>
</feature>
<feature type="glycosylation site" description="O-linked (GalNAc...) threonine" evidence="2">
    <location>
        <position position="2182"/>
    </location>
</feature>
<feature type="glycosylation site" description="O-linked (GalNAc...) threonine" evidence="2">
    <location>
        <position position="2187"/>
    </location>
</feature>
<feature type="glycosylation site" description="O-linked (GalNAc...) threonine" evidence="2">
    <location>
        <position position="2191"/>
    </location>
</feature>
<feature type="glycosylation site" description="O-linked (GalNAc...) threonine" evidence="2">
    <location>
        <position position="2196"/>
    </location>
</feature>
<feature type="glycosylation site" description="O-linked (GalNAc...) threonine" evidence="2">
    <location>
        <position position="2198"/>
    </location>
</feature>
<feature type="glycosylation site" description="O-linked (GalNAc...) threonine" evidence="2">
    <location>
        <position position="2203"/>
    </location>
</feature>
<feature type="glycosylation site" description="O-linked (GalNAc...) threonine" evidence="2">
    <location>
        <position position="2207"/>
    </location>
</feature>
<feature type="glycosylation site" description="O-linked (GalNAc...) threonine" evidence="2">
    <location>
        <position position="2244"/>
    </location>
</feature>
<feature type="glycosylation site" description="O-linked (GalNAc...) threonine" evidence="2">
    <location>
        <position position="2254"/>
    </location>
</feature>
<feature type="glycosylation site" description="O-linked (GalNAc...) threonine" evidence="2">
    <location>
        <position position="2255"/>
    </location>
</feature>
<feature type="glycosylation site" description="O-linked (GalNAc...) threonine" evidence="2">
    <location>
        <position position="2283"/>
    </location>
</feature>
<feature type="glycosylation site" description="O-linked (GalNAc...) threonine" evidence="2">
    <location>
        <position position="2286"/>
    </location>
</feature>
<feature type="glycosylation site" description="O-linked (GalNAc...) threonine" evidence="2">
    <location>
        <position position="2287"/>
    </location>
</feature>
<feature type="glycosylation site" description="O-linked (GalNAc...) threonine" evidence="2">
    <location>
        <position position="2292"/>
    </location>
</feature>
<feature type="glycosylation site" description="O-linked (GalNAc...) threonine" evidence="2">
    <location>
        <position position="2299"/>
    </location>
</feature>
<feature type="glycosylation site" description="O-linked (GalNAc...) threonine" evidence="2">
    <location>
        <position position="2303"/>
    </location>
</feature>
<feature type="glycosylation site" description="O-linked (GalNAc...) threonine" evidence="2">
    <location>
        <position position="2308"/>
    </location>
</feature>
<feature type="glycosylation site" description="O-linked (GalNAc...) threonine" evidence="2">
    <location>
        <position position="2324"/>
    </location>
</feature>
<feature type="glycosylation site" description="O-linked (GalNAc...) threonine" evidence="2">
    <location>
        <position position="2331"/>
    </location>
</feature>
<feature type="glycosylation site" description="O-linked (GalNAc...) threonine" evidence="2">
    <location>
        <position position="2334"/>
    </location>
</feature>
<feature type="glycosylation site" description="O-linked (GalNAc...) threonine" evidence="2">
    <location>
        <position position="2335"/>
    </location>
</feature>
<feature type="glycosylation site" description="O-linked (GalNAc...) threonine" evidence="2">
    <location>
        <position position="2340"/>
    </location>
</feature>
<feature type="glycosylation site" description="O-linked (GalNAc...) threonine" evidence="2">
    <location>
        <position position="2347"/>
    </location>
</feature>
<feature type="glycosylation site" description="O-linked (GalNAc...) threonine" evidence="2">
    <location>
        <position position="2351"/>
    </location>
</feature>
<feature type="glycosylation site" description="O-linked (GalNAc...) threonine" evidence="2">
    <location>
        <position position="2356"/>
    </location>
</feature>
<feature type="glycosylation site" description="O-linked (GalNAc...) threonine" evidence="2">
    <location>
        <position position="2363"/>
    </location>
</feature>
<feature type="glycosylation site" description="O-linked (GalNAc...) threonine" evidence="2">
    <location>
        <position position="2366"/>
    </location>
</feature>
<feature type="glycosylation site" description="O-linked (GalNAc...) threonine" evidence="2">
    <location>
        <position position="2367"/>
    </location>
</feature>
<feature type="glycosylation site" description="O-linked (GalNAc...) threonine" evidence="2">
    <location>
        <position position="2372"/>
    </location>
</feature>
<feature type="glycosylation site" description="O-linked (GalNAc...) threonine" evidence="2">
    <location>
        <position position="2382"/>
    </location>
</feature>
<feature type="glycosylation site" description="O-linked (GalNAc...) threonine" evidence="2">
    <location>
        <position position="2383"/>
    </location>
</feature>
<feature type="glycosylation site" description="O-linked (GalNAc...) threonine" evidence="2">
    <location>
        <position position="2388"/>
    </location>
</feature>
<feature type="glycosylation site" description="O-linked (GalNAc...) threonine" evidence="2">
    <location>
        <position position="2395"/>
    </location>
</feature>
<feature type="glycosylation site" description="O-linked (GalNAc...) threonine" evidence="2">
    <location>
        <position position="2398"/>
    </location>
</feature>
<feature type="glycosylation site" description="O-linked (GalNAc...) threonine" evidence="2">
    <location>
        <position position="2399"/>
    </location>
</feature>
<feature type="glycosylation site" description="O-linked (GalNAc...) threonine" evidence="2">
    <location>
        <position position="2406"/>
    </location>
</feature>
<feature type="glycosylation site" description="N-linked (GlcNAc...) asparagine" evidence="5">
    <location>
        <position position="2437"/>
    </location>
</feature>
<feature type="glycosylation site" description="O-linked (GalNAc...) threonine" evidence="2">
    <location>
        <position position="2452"/>
    </location>
</feature>
<feature type="glycosylation site" description="O-linked (GalNAc...) threonine" evidence="2">
    <location>
        <position position="2454"/>
    </location>
</feature>
<feature type="glycosylation site" description="O-linked (GalNAc...) threonine" evidence="2">
    <location>
        <position position="2459"/>
    </location>
</feature>
<feature type="glycosylation site" description="O-linked (GalNAc...) threonine" evidence="2">
    <location>
        <position position="2462"/>
    </location>
</feature>
<feature type="glycosylation site" description="O-linked (GalNAc...) threonine" evidence="2">
    <location>
        <position position="2463"/>
    </location>
</feature>
<feature type="glycosylation site" description="O-linked (GalNAc...) threonine" evidence="2">
    <location>
        <position position="2468"/>
    </location>
</feature>
<feature type="glycosylation site" description="O-linked (GalNAc...) threonine" evidence="2">
    <location>
        <position position="2500"/>
    </location>
</feature>
<feature type="glycosylation site" description="O-linked (GalNAc...) threonine" evidence="2">
    <location>
        <position position="2507"/>
    </location>
</feature>
<feature type="glycosylation site" description="O-linked (GalNAc...) threonine" evidence="2">
    <location>
        <position position="2510"/>
    </location>
</feature>
<feature type="glycosylation site" description="O-linked (GalNAc...) threonine" evidence="2">
    <location>
        <position position="2511"/>
    </location>
</feature>
<feature type="glycosylation site" description="O-linked (GalNAc...) threonine" evidence="2">
    <location>
        <position position="2516"/>
    </location>
</feature>
<feature type="glycosylation site" description="O-linked (GalNAc...) threonine" evidence="2">
    <location>
        <position position="2518"/>
    </location>
</feature>
<feature type="glycosylation site" description="O-linked (GalNAc...) threonine" evidence="2">
    <location>
        <position position="2523"/>
    </location>
</feature>
<feature type="glycosylation site" description="O-linked (GalNAc...) threonine" evidence="2">
    <location>
        <position position="2526"/>
    </location>
</feature>
<feature type="glycosylation site" description="N-linked (GlcNAc...) asparagine" evidence="5">
    <location>
        <position position="2533"/>
    </location>
</feature>
<feature type="glycosylation site" description="O-linked (GalNAc...) threonine" evidence="2">
    <location>
        <position position="2564"/>
    </location>
</feature>
<feature type="glycosylation site" description="O-linked (GalNAc...) threonine" evidence="2">
    <location>
        <position position="2566"/>
    </location>
</feature>
<feature type="glycosylation site" description="O-linked (GalNAc...) threonine" evidence="2">
    <location>
        <position position="2571"/>
    </location>
</feature>
<feature type="glycosylation site" description="O-linked (GalNAc...) threonine" evidence="2">
    <location>
        <position position="2575"/>
    </location>
</feature>
<feature type="glycosylation site" description="O-linked (GalNAc...) threonine" evidence="2">
    <location>
        <position position="2580"/>
    </location>
</feature>
<feature type="glycosylation site" description="O-linked (GalNAc...) threonine" evidence="2">
    <location>
        <position position="2582"/>
    </location>
</feature>
<feature type="glycosylation site" description="O-linked (GalNAc...) threonine" evidence="2">
    <location>
        <position position="2587"/>
    </location>
</feature>
<feature type="glycosylation site" description="O-linked (GalNAc...) threonine" evidence="2">
    <location>
        <position position="2590"/>
    </location>
</feature>
<feature type="glycosylation site" description="O-linked (GalNAc...) threonine" evidence="2">
    <location>
        <position position="2591"/>
    </location>
</feature>
<feature type="glycosylation site" description="O-linked (GalNAc...) threonine" evidence="2">
    <location>
        <position position="2596"/>
    </location>
</feature>
<feature type="glycosylation site" description="O-linked (GalNAc...) threonine" evidence="2">
    <location>
        <position position="2598"/>
    </location>
</feature>
<feature type="glycosylation site" description="O-linked (GalNAc...) threonine" evidence="2">
    <location>
        <position position="2619"/>
    </location>
</feature>
<feature type="glycosylation site" description="O-linked (GalNAc...) threonine" evidence="2">
    <location>
        <position position="2622"/>
    </location>
</feature>
<feature type="glycosylation site" description="O-linked (GalNAc...) threonine" evidence="2">
    <location>
        <position position="2623"/>
    </location>
</feature>
<feature type="glycosylation site" description="O-linked (GalNAc...) threonine" evidence="2">
    <location>
        <position position="2628"/>
    </location>
</feature>
<feature type="glycosylation site" description="O-linked (GalNAc...) threonine" evidence="2">
    <location>
        <position position="2660"/>
    </location>
</feature>
<feature type="glycosylation site" description="O-linked (GalNAc...) threonine" evidence="2">
    <location>
        <position position="2667"/>
    </location>
</feature>
<feature type="glycosylation site" description="O-linked (GalNAc...) threonine" evidence="2">
    <location>
        <position position="2670"/>
    </location>
</feature>
<feature type="glycosylation site" description="O-linked (GalNAc...) threonine" evidence="2">
    <location>
        <position position="2671"/>
    </location>
</feature>
<feature type="glycosylation site" description="O-linked (GalNAc...) threonine" evidence="2">
    <location>
        <position position="2676"/>
    </location>
</feature>
<feature type="glycosylation site" description="O-linked (GalNAc...) threonine" evidence="2">
    <location>
        <position position="2683"/>
    </location>
</feature>
<feature type="glycosylation site" description="O-linked (GalNAc...) threonine" evidence="2">
    <location>
        <position position="2687"/>
    </location>
</feature>
<feature type="glycosylation site" description="O-linked (GalNAc...) threonine" evidence="2">
    <location>
        <position position="2692"/>
    </location>
</feature>
<feature type="glycosylation site" description="O-linked (GalNAc...) threonine" evidence="2">
    <location>
        <position position="2694"/>
    </location>
</feature>
<feature type="glycosylation site" description="O-linked (GalNAc...) threonine" evidence="2">
    <location>
        <position position="2740"/>
    </location>
</feature>
<feature type="glycosylation site" description="O-linked (GalNAc...) threonine" evidence="2">
    <location>
        <position position="2742"/>
    </location>
</feature>
<feature type="glycosylation site" description="O-linked (GalNAc...) threonine" evidence="2">
    <location>
        <position position="2750"/>
    </location>
</feature>
<feature type="glycosylation site" description="O-linked (GalNAc...) threonine" evidence="2">
    <location>
        <position position="2751"/>
    </location>
</feature>
<feature type="glycosylation site" description="O-linked (GalNAc...) threonine" evidence="2">
    <location>
        <position position="2756"/>
    </location>
</feature>
<feature type="glycosylation site" description="O-linked (GalNAc...) threonine" evidence="2">
    <location>
        <position position="2758"/>
    </location>
</feature>
<feature type="glycosylation site" description="O-linked (GalNAc...) threonine" evidence="2">
    <location>
        <position position="2763"/>
    </location>
</feature>
<feature type="glycosylation site" description="O-linked (GalNAc...) threonine" evidence="2">
    <location>
        <position position="2767"/>
    </location>
</feature>
<feature type="glycosylation site" description="N-linked (GlcNAc...) asparagine" evidence="5">
    <location>
        <position position="2773"/>
    </location>
</feature>
<feature type="glycosylation site" description="O-linked (GalNAc...) threonine" evidence="2">
    <location>
        <position position="2779"/>
    </location>
</feature>
<feature type="glycosylation site" description="O-linked (GalNAc...) threonine" evidence="2">
    <location>
        <position position="2783"/>
    </location>
</feature>
<feature type="glycosylation site" description="O-linked (GalNAc...) threonine" evidence="2">
    <location>
        <position position="2788"/>
    </location>
</feature>
<feature type="glycosylation site" description="O-linked (GalNAc...) threonine" evidence="2">
    <location>
        <position position="2795"/>
    </location>
</feature>
<feature type="glycosylation site" description="O-linked (GalNAc...) threonine" evidence="2">
    <location>
        <position position="2798"/>
    </location>
</feature>
<feature type="glycosylation site" description="O-linked (GalNAc...) threonine" evidence="2">
    <location>
        <position position="2799"/>
    </location>
</feature>
<feature type="glycosylation site" description="O-linked (GalNAc...) threonine" evidence="2">
    <location>
        <position position="2804"/>
    </location>
</feature>
<feature type="glycosylation site" description="O-linked (GalNAc...) threonine" evidence="2">
    <location>
        <position position="2846"/>
    </location>
</feature>
<feature type="glycosylation site" description="O-linked (GalNAc...) threonine" evidence="2">
    <location>
        <position position="2847"/>
    </location>
</feature>
<feature type="glycosylation site" description="O-linked (GalNAc...) threonine" evidence="2">
    <location>
        <position position="2852"/>
    </location>
</feature>
<feature type="glycosylation site" description="O-linked (GalNAc...) threonine" evidence="2">
    <location>
        <position position="2910"/>
    </location>
</feature>
<feature type="glycosylation site" description="O-linked (GalNAc...) threonine" evidence="2">
    <location>
        <position position="2911"/>
    </location>
</feature>
<feature type="glycosylation site" description="O-linked (GalNAc...) threonine" evidence="2">
    <location>
        <position position="2916"/>
    </location>
</feature>
<feature type="glycosylation site" description="O-linked (GalNAc...) threonine" evidence="2">
    <location>
        <position position="2918"/>
    </location>
</feature>
<feature type="glycosylation site" description="O-linked (GalNAc...) threonine" evidence="2">
    <location>
        <position position="2923"/>
    </location>
</feature>
<feature type="glycosylation site" description="O-linked (GalNAc...) threonine" evidence="2">
    <location>
        <position position="2927"/>
    </location>
</feature>
<feature type="glycosylation site" description="O-linked (GalNAc...) threonine" evidence="2">
    <location>
        <position position="2932"/>
    </location>
</feature>
<feature type="glycosylation site" description="O-linked (GalNAc...) threonine" evidence="2">
    <location>
        <position position="2939"/>
    </location>
</feature>
<feature type="glycosylation site" description="O-linked (GalNAc...) threonine" evidence="2">
    <location>
        <position position="2942"/>
    </location>
</feature>
<feature type="glycosylation site" description="O-linked (GalNAc...) threonine" evidence="2">
    <location>
        <position position="2943"/>
    </location>
</feature>
<feature type="glycosylation site" description="O-linked (GalNAc...) threonine" evidence="2">
    <location>
        <position position="2948"/>
    </location>
</feature>
<feature type="glycosylation site" description="O-linked (GalNAc...) threonine" evidence="2">
    <location>
        <position position="2950"/>
    </location>
</feature>
<feature type="glycosylation site" description="O-linked (GalNAc...) threonine" evidence="2">
    <location>
        <position position="2955"/>
    </location>
</feature>
<feature type="glycosylation site" description="O-linked (GalNAc...) threonine" evidence="2">
    <location>
        <position position="2959"/>
    </location>
</feature>
<feature type="glycosylation site" description="O-linked (GalNAc...) threonine" evidence="2">
    <location>
        <position position="2966"/>
    </location>
</feature>
<feature type="glycosylation site" description="O-linked (GalNAc...) threonine" evidence="2">
    <location>
        <position position="2971"/>
    </location>
</feature>
<feature type="glycosylation site" description="O-linked (GalNAc...) threonine" evidence="2">
    <location>
        <position position="2975"/>
    </location>
</feature>
<feature type="glycosylation site" description="O-linked (GalNAc...) threonine" evidence="2">
    <location>
        <position position="3023"/>
    </location>
</feature>
<feature type="glycosylation site" description="O-linked (GalNAc...) threonine" evidence="2">
    <location>
        <position position="3028"/>
    </location>
</feature>
<feature type="glycosylation site" description="O-linked (GalNAc...) threonine" evidence="2">
    <location>
        <position position="3035"/>
    </location>
</feature>
<feature type="glycosylation site" description="O-linked (GalNAc...) threonine" evidence="2">
    <location>
        <position position="3039"/>
    </location>
</feature>
<feature type="glycosylation site" description="O-linked (GalNAc...) threonine" evidence="2">
    <location>
        <position position="3071"/>
    </location>
</feature>
<feature type="glycosylation site" description="O-linked (GalNAc...) threonine" evidence="2">
    <location>
        <position position="3076"/>
    </location>
</feature>
<feature type="glycosylation site" description="O-linked (GalNAc...) threonine" evidence="2">
    <location>
        <position position="3078"/>
    </location>
</feature>
<feature type="glycosylation site" description="O-linked (GalNAc...) threonine" evidence="2">
    <location>
        <position position="3083"/>
    </location>
</feature>
<feature type="glycosylation site" description="O-linked (GalNAc...) threonine" evidence="2">
    <location>
        <position position="3087"/>
    </location>
</feature>
<feature type="glycosylation site" description="O-linked (GalNAc...) threonine" evidence="2">
    <location>
        <position position="3092"/>
    </location>
</feature>
<feature type="glycosylation site" description="O-linked (GalNAc...) threonine" evidence="2">
    <location>
        <position position="3099"/>
    </location>
</feature>
<feature type="glycosylation site" description="O-linked (GalNAc...) threonine" evidence="2">
    <location>
        <position position="3102"/>
    </location>
</feature>
<feature type="glycosylation site" description="O-linked (GalNAc...) threonine" evidence="2">
    <location>
        <position position="3103"/>
    </location>
</feature>
<feature type="glycosylation site" description="O-linked (GalNAc...) threonine" evidence="2">
    <location>
        <position position="3108"/>
    </location>
</feature>
<feature type="glycosylation site" description="O-linked (GalNAc...) threonine" evidence="2">
    <location>
        <position position="3115"/>
    </location>
</feature>
<feature type="glycosylation site" description="O-linked (GalNAc...) threonine" evidence="2">
    <location>
        <position position="3118"/>
    </location>
</feature>
<feature type="glycosylation site" description="O-linked (GalNAc...) threonine" evidence="2">
    <location>
        <position position="3119"/>
    </location>
</feature>
<feature type="glycosylation site" description="O-linked (GalNAc...) threonine" evidence="2">
    <location>
        <position position="3124"/>
    </location>
</feature>
<feature type="glycosylation site" description="O-linked (GalNAc...) threonine" evidence="2">
    <location>
        <position position="3126"/>
    </location>
</feature>
<feature type="glycosylation site" description="O-linked (GalNAc...) threonine" evidence="2">
    <location>
        <position position="3131"/>
    </location>
</feature>
<feature type="glycosylation site" description="O-linked (GalNAc...) threonine" evidence="2">
    <location>
        <position position="3135"/>
    </location>
</feature>
<feature type="glycosylation site" description="O-linked (GalNAc...) threonine" evidence="2">
    <location>
        <position position="3140"/>
    </location>
</feature>
<feature type="glycosylation site" description="O-linked (GalNAc...) threonine" evidence="2">
    <location>
        <position position="3142"/>
    </location>
</feature>
<feature type="glycosylation site" description="O-linked (GalNAc...) threonine" evidence="2">
    <location>
        <position position="3147"/>
    </location>
</feature>
<feature type="glycosylation site" description="O-linked (GalNAc...) threonine" evidence="2">
    <location>
        <position position="3150"/>
    </location>
</feature>
<feature type="glycosylation site" description="O-linked (GalNAc...) threonine" evidence="2">
    <location>
        <position position="3151"/>
    </location>
</feature>
<feature type="glycosylation site" description="O-linked (GalNAc...) threonine" evidence="2">
    <location>
        <position position="3156"/>
    </location>
</feature>
<feature type="glycosylation site" description="O-linked (GalNAc...) threonine" evidence="2">
    <location>
        <position position="3158"/>
    </location>
</feature>
<feature type="glycosylation site" description="O-linked (GalNAc...) threonine" evidence="2">
    <location>
        <position position="3163"/>
    </location>
</feature>
<feature type="glycosylation site" description="O-linked (GalNAc...) threonine" evidence="2">
    <location>
        <position position="3167"/>
    </location>
</feature>
<feature type="glycosylation site" description="O-linked (GalNAc...) threonine" evidence="2">
    <location>
        <position position="3172"/>
    </location>
</feature>
<feature type="glycosylation site" description="O-linked (GalNAc...) threonine" evidence="2">
    <location>
        <position position="3179"/>
    </location>
</feature>
<feature type="glycosylation site" description="O-linked (GalNAc...) threonine" evidence="2">
    <location>
        <position position="3182"/>
    </location>
</feature>
<feature type="glycosylation site" description="O-linked (GalNAc...) threonine" evidence="2">
    <location>
        <position position="3183"/>
    </location>
</feature>
<feature type="glycosylation site" description="O-linked (GalNAc...) threonine" evidence="2">
    <location>
        <position position="3188"/>
    </location>
</feature>
<feature type="glycosylation site" description="O-linked (GalNAc...) threonine" evidence="2">
    <location>
        <position position="3220"/>
    </location>
</feature>
<feature type="glycosylation site" description="O-linked (GalNAc...) threonine" evidence="2">
    <location>
        <position position="3227"/>
    </location>
</feature>
<feature type="glycosylation site" description="O-linked (GalNAc...) threonine" evidence="2">
    <location>
        <position position="3230"/>
    </location>
</feature>
<feature type="glycosylation site" description="O-linked (GalNAc...) threonine" evidence="2">
    <location>
        <position position="3231"/>
    </location>
</feature>
<feature type="glycosylation site" description="O-linked (GalNAc...) threonine" evidence="2">
    <location>
        <position position="3236"/>
    </location>
</feature>
<feature type="glycosylation site" description="O-linked (GalNAc...) threonine" evidence="2">
    <location>
        <position position="3243"/>
    </location>
</feature>
<feature type="glycosylation site" description="O-linked (GalNAc...) threonine" evidence="2">
    <location>
        <position position="3247"/>
    </location>
</feature>
<feature type="glycosylation site" description="O-linked (GalNAc...) threonine" evidence="2">
    <location>
        <position position="3252"/>
    </location>
</feature>
<feature type="glycosylation site" description="O-linked (GalNAc...) threonine" evidence="2">
    <location>
        <position position="3254"/>
    </location>
</feature>
<feature type="glycosylation site" description="O-linked (GalNAc...) threonine" evidence="2">
    <location>
        <position position="3294"/>
    </location>
</feature>
<feature type="glycosylation site" description="O-linked (GalNAc...) threonine" evidence="2">
    <location>
        <position position="3332"/>
    </location>
</feature>
<feature type="glycosylation site" description="O-linked (GalNAc...) threonine" evidence="2">
    <location>
        <position position="3339"/>
    </location>
</feature>
<feature type="glycosylation site" description="O-linked (GalNAc...) threonine" evidence="2">
    <location>
        <position position="3342"/>
    </location>
</feature>
<feature type="glycosylation site" description="O-linked (GalNAc...) threonine" evidence="2">
    <location>
        <position position="3343"/>
    </location>
</feature>
<feature type="glycosylation site" description="O-linked (GalNAc...) threonine" evidence="2">
    <location>
        <position position="3348"/>
    </location>
</feature>
<feature type="glycosylation site" description="O-linked (GalNAc...) threonine" evidence="2">
    <location>
        <position position="3350"/>
    </location>
</feature>
<feature type="glycosylation site" description="O-linked (GalNAc...) threonine" evidence="2">
    <location>
        <position position="3355"/>
    </location>
</feature>
<feature type="glycosylation site" description="O-linked (GalNAc...) threonine" evidence="2">
    <location>
        <position position="3359"/>
    </location>
</feature>
<feature type="glycosylation site" description="N-linked (GlcNAc...) asparagine" evidence="5">
    <location>
        <position position="3397"/>
    </location>
</feature>
<feature type="glycosylation site" description="O-linked (GalNAc...) threonine" evidence="2">
    <location>
        <position position="3398"/>
    </location>
</feature>
<feature type="glycosylation site" description="O-linked (GalNAc...) threonine" evidence="2">
    <location>
        <position position="3403"/>
    </location>
</feature>
<feature type="glycosylation site" description="O-linked (GalNAc...) threonine" evidence="2">
    <location>
        <position position="3406"/>
    </location>
</feature>
<feature type="glycosylation site" description="O-linked (GalNAc...) threonine" evidence="2">
    <location>
        <position position="3412"/>
    </location>
</feature>
<feature type="glycosylation site" description="O-linked (GalNAc...) threonine" evidence="2">
    <location>
        <position position="3419"/>
    </location>
</feature>
<feature type="glycosylation site" description="O-linked (GalNAc...) threonine" evidence="2">
    <location>
        <position position="3423"/>
    </location>
</feature>
<feature type="glycosylation site" description="O-linked (GalNAc...) threonine" evidence="2">
    <location>
        <position position="3428"/>
    </location>
</feature>
<feature type="glycosylation site" description="O-linked (GalNAc...) threonine" evidence="2">
    <location>
        <position position="3430"/>
    </location>
</feature>
<feature type="glycosylation site" description="O-linked (GalNAc...) threonine" evidence="2">
    <location>
        <position position="3435"/>
    </location>
</feature>
<feature type="glycosylation site" description="O-linked (GalNAc...) threonine" evidence="2">
    <location>
        <position position="3439"/>
    </location>
</feature>
<feature type="glycosylation site" description="O-linked (GalNAc...) threonine" evidence="2">
    <location>
        <position position="3444"/>
    </location>
</feature>
<feature type="glycosylation site" description="O-linked (GalNAc...) serine" evidence="2">
    <location>
        <position position="3445"/>
    </location>
</feature>
<feature type="glycosylation site" description="O-linked (GalNAc...) threonine" evidence="2">
    <location>
        <position position="3446"/>
    </location>
</feature>
<feature type="glycosylation site" description="O-linked (GalNAc...) threonine" evidence="2">
    <location>
        <position position="3451"/>
    </location>
</feature>
<feature type="glycosylation site" description="O-linked (GalNAc...) threonine" evidence="2">
    <location>
        <position position="3454"/>
    </location>
</feature>
<feature type="glycosylation site" description="O-linked (GalNAc...) threonine" evidence="2">
    <location>
        <position position="3455"/>
    </location>
</feature>
<feature type="glycosylation site" description="O-linked (GalNAc...) threonine" evidence="2">
    <location>
        <position position="3460"/>
    </location>
</feature>
<feature type="glycosylation site" description="O-linked (GalNAc...) threonine" evidence="2">
    <location>
        <position position="3462"/>
    </location>
</feature>
<feature type="glycosylation site" description="O-linked (GalNAc...) threonine" evidence="2">
    <location>
        <position position="3467"/>
    </location>
</feature>
<feature type="glycosylation site" description="O-linked (GalNAc...) threonine" evidence="2">
    <location>
        <position position="3470"/>
    </location>
</feature>
<feature type="glycosylation site" description="O-linked (GalNAc...) threonine" evidence="2">
    <location>
        <position position="3471"/>
    </location>
</feature>
<feature type="glycosylation site" description="O-linked (GalNAc...) threonine" evidence="2">
    <location>
        <position position="3476"/>
    </location>
</feature>
<feature type="glycosylation site" description="O-linked (GalNAc...) threonine" evidence="2">
    <location>
        <position position="3483"/>
    </location>
</feature>
<feature type="glycosylation site" description="O-linked (GalNAc...) threonine" evidence="2">
    <location>
        <position position="3486"/>
    </location>
</feature>
<feature type="glycosylation site" description="O-linked (GalNAc...) threonine" evidence="2">
    <location>
        <position position="3487"/>
    </location>
</feature>
<feature type="glycosylation site" description="O-linked (GalNAc...) threonine" evidence="2">
    <location>
        <position position="3492"/>
    </location>
</feature>
<feature type="glycosylation site" description="O-linked (GalNAc...) threonine" evidence="2">
    <location>
        <position position="3499"/>
    </location>
</feature>
<feature type="glycosylation site" description="O-linked (GalNAc...) threonine" evidence="2">
    <location>
        <position position="3502"/>
    </location>
</feature>
<feature type="glycosylation site" description="O-linked (GalNAc...) threonine" evidence="2">
    <location>
        <position position="3504"/>
    </location>
</feature>
<feature type="glycosylation site" description="O-linked (GalNAc...) threonine" evidence="2">
    <location>
        <position position="3508"/>
    </location>
</feature>
<feature type="glycosylation site" description="O-linked (GalNAc...) threonine" evidence="2">
    <location>
        <position position="3515"/>
    </location>
</feature>
<feature type="glycosylation site" description="O-linked (GalNAc...) threonine" evidence="2">
    <location>
        <position position="3519"/>
    </location>
</feature>
<feature type="glycosylation site" description="O-linked (GalNAc...) threonine" evidence="2">
    <location>
        <position position="3524"/>
    </location>
</feature>
<feature type="glycosylation site" description="O-linked (GalNAc...) threonine" evidence="2">
    <location>
        <position position="3526"/>
    </location>
</feature>
<feature type="glycosylation site" description="O-linked (GalNAc...) threonine" evidence="2">
    <location>
        <position position="3531"/>
    </location>
</feature>
<feature type="glycosylation site" description="O-linked (GalNAc...) threonine" evidence="2">
    <location>
        <position position="3535"/>
    </location>
</feature>
<feature type="glycosylation site" description="O-linked (GalNAc...) threonine" evidence="2">
    <location>
        <position position="3540"/>
    </location>
</feature>
<feature type="glycosylation site" description="O-linked (GalNAc...) threonine" evidence="2">
    <location>
        <position position="3547"/>
    </location>
</feature>
<feature type="glycosylation site" description="O-linked (GalNAc...) threonine" evidence="2">
    <location>
        <position position="3550"/>
    </location>
</feature>
<feature type="glycosylation site" description="O-linked (GalNAc...) threonine" evidence="2">
    <location>
        <position position="3551"/>
    </location>
</feature>
<feature type="glycosylation site" description="O-linked (GalNAc...) threonine" evidence="2">
    <location>
        <position position="3556"/>
    </location>
</feature>
<feature type="glycosylation site" description="O-linked (GalNAc...) threonine" evidence="2">
    <location>
        <position position="3567"/>
    </location>
</feature>
<feature type="glycosylation site" description="O-linked (GalNAc...) threonine" evidence="2">
    <location>
        <position position="3614"/>
    </location>
</feature>
<feature type="glycosylation site" description="O-linked (GalNAc...) threonine" evidence="2">
    <location>
        <position position="3615"/>
    </location>
</feature>
<feature type="glycosylation site" description="O-linked (GalNAc...) threonine" evidence="2">
    <location>
        <position position="3622"/>
    </location>
</feature>
<feature type="glycosylation site" description="O-linked (GalNAc...) threonine" evidence="2">
    <location>
        <position position="3678"/>
    </location>
</feature>
<feature type="glycosylation site" description="O-linked (GalNAc...) threonine" evidence="2">
    <location>
        <position position="3679"/>
    </location>
</feature>
<feature type="glycosylation site" description="O-linked (GalNAc...) threonine" evidence="2">
    <location>
        <position position="3686"/>
    </location>
</feature>
<feature type="glycosylation site" description="O-linked (GalNAc...) threonine" evidence="2">
    <location>
        <position position="3691"/>
    </location>
</feature>
<feature type="glycosylation site" description="O-linked (GalNAc...) threonine" evidence="2">
    <location>
        <position position="3695"/>
    </location>
</feature>
<feature type="glycosylation site" description="O-linked (GalNAc...) threonine" evidence="2">
    <location>
        <position position="3700"/>
    </location>
</feature>
<feature type="glycosylation site" description="O-linked (GalNAc...) threonine" evidence="2">
    <location>
        <position position="3710"/>
    </location>
</feature>
<feature type="glycosylation site" description="O-linked (GalNAc...) threonine" evidence="2">
    <location>
        <position position="3711"/>
    </location>
</feature>
<feature type="glycosylation site" description="O-linked (GalNAc...) threonine" evidence="2">
    <location>
        <position position="3716"/>
    </location>
</feature>
<feature type="glycosylation site" description="O-linked (GalNAc...) threonine" evidence="2">
    <location>
        <position position="3718"/>
    </location>
</feature>
<feature type="glycosylation site" description="O-linked (GalNAc...) threonine" evidence="2">
    <location>
        <position position="3723"/>
    </location>
</feature>
<feature type="glycosylation site" description="O-linked (GalNAc...) threonine" evidence="2">
    <location>
        <position position="3727"/>
    </location>
</feature>
<feature type="glycosylation site" description="O-linked (GalNAc...) threonine" evidence="2">
    <location>
        <position position="3732"/>
    </location>
</feature>
<feature type="glycosylation site" description="O-linked (GalNAc...) threonine" evidence="2">
    <location>
        <position position="3739"/>
    </location>
</feature>
<feature type="glycosylation site" description="O-linked (GalNAc...) threonine" evidence="2">
    <location>
        <position position="3743"/>
    </location>
</feature>
<feature type="glycosylation site" description="O-linked (GalNAc...) threonine" evidence="2">
    <location>
        <position position="3748"/>
    </location>
</feature>
<feature type="glycosylation site" description="O-linked (GalNAc...) threonine" evidence="2">
    <location>
        <position position="3780"/>
    </location>
</feature>
<feature type="glycosylation site" description="O-linked (GalNAc...) threonine" evidence="2">
    <location>
        <position position="3787"/>
    </location>
</feature>
<feature type="glycosylation site" description="O-linked (GalNAc...) threonine" evidence="2">
    <location>
        <position position="3790"/>
    </location>
</feature>
<feature type="glycosylation site" description="O-linked (GalNAc...) threonine" evidence="2">
    <location>
        <position position="3791"/>
    </location>
</feature>
<feature type="glycosylation site" description="O-linked (GalNAc...) threonine" evidence="2">
    <location>
        <position position="3796"/>
    </location>
</feature>
<feature type="glycosylation site" description="O-linked (GalNAc...) threonine" evidence="2">
    <location>
        <position position="3798"/>
    </location>
</feature>
<feature type="glycosylation site" description="O-linked (GalNAc...) threonine" evidence="2">
    <location>
        <position position="3803"/>
    </location>
</feature>
<feature type="glycosylation site" description="O-linked (GalNAc...) threonine" evidence="2">
    <location>
        <position position="3807"/>
    </location>
</feature>
<feature type="glycosylation site" description="O-linked (GalNAc...) threonine" evidence="2">
    <location>
        <position position="3812"/>
    </location>
</feature>
<feature type="glycosylation site" description="O-linked (GalNAc...) threonine" evidence="2">
    <location>
        <position position="3822"/>
    </location>
</feature>
<feature type="glycosylation site" description="O-linked (GalNAc...) threonine" evidence="2">
    <location>
        <position position="3823"/>
    </location>
</feature>
<feature type="glycosylation site" description="O-linked (GalNAc...) threonine" evidence="2">
    <location>
        <position position="3828"/>
    </location>
</feature>
<feature type="glycosylation site" description="O-linked (GalNAc...) threonine" evidence="2">
    <location>
        <position position="3835"/>
    </location>
</feature>
<feature type="glycosylation site" description="O-linked (GalNAc...) threonine" evidence="2">
    <location>
        <position position="3839"/>
    </location>
</feature>
<feature type="glycosylation site" description="O-linked (GalNAc...) threonine" evidence="2">
    <location>
        <position position="3844"/>
    </location>
</feature>
<feature type="glycosylation site" description="O-linked (GalNAc...) threonine" evidence="2">
    <location>
        <position position="3851"/>
    </location>
</feature>
<feature type="glycosylation site" description="O-linked (GalNAc...) threonine" evidence="2">
    <location>
        <position position="3854"/>
    </location>
</feature>
<feature type="glycosylation site" description="O-linked (GalNAc...) threonine" evidence="2">
    <location>
        <position position="3860"/>
    </location>
</feature>
<feature type="glycosylation site" description="O-linked (GalNAc...) threonine" evidence="2">
    <location>
        <position position="3867"/>
    </location>
</feature>
<feature type="glycosylation site" description="O-linked (GalNAc...) threonine" evidence="2">
    <location>
        <position position="3871"/>
    </location>
</feature>
<feature type="glycosylation site" description="O-linked (GalNAc...) threonine" evidence="2">
    <location>
        <position position="3876"/>
    </location>
</feature>
<feature type="glycosylation site" description="O-linked (GalNAc...) threonine" evidence="2">
    <location>
        <position position="3883"/>
    </location>
</feature>
<feature type="glycosylation site" description="O-linked (GalNAc...) threonine" evidence="2">
    <location>
        <position position="3886"/>
    </location>
</feature>
<feature type="glycosylation site" description="O-linked (GalNAc...) threonine" evidence="2">
    <location>
        <position position="3887"/>
    </location>
</feature>
<feature type="glycosylation site" description="O-linked (GalNAc...) threonine" evidence="2">
    <location>
        <position position="3892"/>
    </location>
</feature>
<feature type="glycosylation site" description="O-linked (GalNAc...) threonine" evidence="2">
    <location>
        <position position="3894"/>
    </location>
</feature>
<feature type="glycosylation site" description="O-linked (GalNAc...) threonine" evidence="2">
    <location>
        <position position="3899"/>
    </location>
</feature>
<feature type="glycosylation site" description="O-linked (GalNAc...) threonine" evidence="2">
    <location>
        <position position="3903"/>
    </location>
</feature>
<feature type="glycosylation site" description="O-linked (GalNAc...) threonine" evidence="2">
    <location>
        <position position="3935"/>
    </location>
</feature>
<feature type="glycosylation site" description="O-linked (GalNAc...) threonine" evidence="2">
    <location>
        <position position="3940"/>
    </location>
</feature>
<feature type="glycosylation site" description="O-linked (GalNAc...) threonine" evidence="2">
    <location>
        <position position="3942"/>
    </location>
</feature>
<feature type="glycosylation site" description="O-linked (GalNAc...) threonine" evidence="2">
    <location>
        <position position="3947"/>
    </location>
</feature>
<feature type="glycosylation site" description="O-linked (GalNAc...) threonine" evidence="2">
    <location>
        <position position="3950"/>
    </location>
</feature>
<feature type="glycosylation site" description="O-linked (GalNAc...) threonine" evidence="2">
    <location>
        <position position="3951"/>
    </location>
</feature>
<feature type="glycosylation site" description="O-linked (GalNAc...) threonine" evidence="2">
    <location>
        <position position="3956"/>
    </location>
</feature>
<feature type="glycosylation site" description="O-linked (GalNAc...) threonine" evidence="2">
    <location>
        <position position="3958"/>
    </location>
</feature>
<feature type="glycosylation site" description="O-linked (GalNAc...) threonine" evidence="2">
    <location>
        <position position="3963"/>
    </location>
</feature>
<feature type="glycosylation site" description="O-linked (GalNAc...) threonine" evidence="2">
    <location>
        <position position="3967"/>
    </location>
</feature>
<feature type="glycosylation site" description="O-linked (GalNAc...) threonine" evidence="2">
    <location>
        <position position="3972"/>
    </location>
</feature>
<feature type="glycosylation site" description="O-linked (GalNAc...) threonine" evidence="2">
    <location>
        <position position="3979"/>
    </location>
</feature>
<feature type="glycosylation site" description="O-linked (GalNAc...) threonine" evidence="2">
    <location>
        <position position="3983"/>
    </location>
</feature>
<feature type="glycosylation site" description="O-linked (GalNAc...) threonine" evidence="2">
    <location>
        <position position="3988"/>
    </location>
</feature>
<feature type="glycosylation site" description="O-linked (GalNAc...) threonine" evidence="2">
    <location>
        <position position="3990"/>
    </location>
</feature>
<feature type="glycosylation site" description="O-linked (GalNAc...) threonine" evidence="2">
    <location>
        <position position="3995"/>
    </location>
</feature>
<feature type="glycosylation site" description="O-linked (GalNAc...) threonine" evidence="2">
    <location>
        <position position="3999"/>
    </location>
</feature>
<feature type="glycosylation site" description="O-linked (GalNAc...) threonine" evidence="2">
    <location>
        <position position="4004"/>
    </location>
</feature>
<feature type="glycosylation site" description="O-linked (GalNAc...) threonine" evidence="2">
    <location>
        <position position="4006"/>
    </location>
</feature>
<feature type="glycosylation site" description="O-linked (GalNAc...) threonine" evidence="2">
    <location>
        <position position="4011"/>
    </location>
</feature>
<feature type="glycosylation site" description="O-linked (GalNAc...) threonine" evidence="2">
    <location>
        <position position="4015"/>
    </location>
</feature>
<feature type="glycosylation site" description="O-linked (GalNAc...) threonine" evidence="2">
    <location>
        <position position="4020"/>
    </location>
</feature>
<feature type="glycosylation site" description="O-linked (GalNAc...) serine" evidence="2">
    <location>
        <position position="4021"/>
    </location>
</feature>
<feature type="glycosylation site" description="O-linked (GalNAc...) serine" evidence="2">
    <location>
        <position position="4023"/>
    </location>
</feature>
<feature type="glycosylation site" description="O-linked (GalNAc...) serine" evidence="2">
    <location>
        <position position="4024"/>
    </location>
</feature>
<feature type="glycosylation site" description="O-linked (GalNAc...) serine" evidence="2">
    <location>
        <position position="4026"/>
    </location>
</feature>
<feature type="glycosylation site" description="O-linked (GalNAc...) threonine" evidence="2">
    <location>
        <position position="4027"/>
    </location>
</feature>
<feature type="glycosylation site" description="O-linked (GalNAc...) threonine" evidence="2">
    <location>
        <position position="4031"/>
    </location>
</feature>
<feature type="glycosylation site" description="O-linked (GalNAc...) threonine" evidence="2">
    <location>
        <position position="4036"/>
    </location>
</feature>
<feature type="glycosylation site" description="O-linked (GalNAc...) serine" evidence="2">
    <location>
        <position position="4037"/>
    </location>
</feature>
<feature type="glycosylation site" description="O-linked (GalNAc...) threonine" evidence="2">
    <location>
        <position position="4038"/>
    </location>
</feature>
<feature type="glycosylation site" description="O-linked (GalNAc...) threonine" evidence="2">
    <location>
        <position position="4043"/>
    </location>
</feature>
<feature type="glycosylation site" description="O-linked (GalNAc...) threonine" evidence="2">
    <location>
        <position position="4046"/>
    </location>
</feature>
<feature type="glycosylation site" description="O-linked (GalNAc...) threonine" evidence="2">
    <location>
        <position position="4047"/>
    </location>
</feature>
<feature type="glycosylation site" description="N-linked (GlcNAc...) asparagine" evidence="5">
    <location>
        <position position="4053"/>
    </location>
</feature>
<feature type="glycosylation site" description="O-linked (GalNAc...) threonine" evidence="2">
    <location>
        <position position="4078"/>
    </location>
</feature>
<feature type="glycosylation site" description="O-linked (GalNAc...) threonine" evidence="2">
    <location>
        <position position="4084"/>
    </location>
</feature>
<feature type="glycosylation site" description="O-linked (GalNAc...) threonine" evidence="2">
    <location>
        <position position="4110"/>
    </location>
</feature>
<feature type="glycosylation site" description="O-linked (GalNAc...) threonine" evidence="2">
    <location>
        <position position="4111"/>
    </location>
</feature>
<feature type="glycosylation site" description="O-linked (GalNAc...) threonine" evidence="2">
    <location>
        <position position="4116"/>
    </location>
</feature>
<feature type="glycosylation site" description="O-linked (GalNAc...) threonine" evidence="2">
    <location>
        <position position="4118"/>
    </location>
</feature>
<feature type="glycosylation site" description="O-linked (GalNAc...) threonine" evidence="2">
    <location>
        <position position="4123"/>
    </location>
</feature>
<feature type="glycosylation site" description="O-linked (GalNAc...) threonine" evidence="2">
    <location>
        <position position="4127"/>
    </location>
</feature>
<feature type="glycosylation site" description="O-linked (GalNAc...) threonine" evidence="2">
    <location>
        <position position="4132"/>
    </location>
</feature>
<feature type="glycosylation site" description="O-linked (GalNAc...) threonine" evidence="2">
    <location>
        <position position="4139"/>
    </location>
</feature>
<feature type="glycosylation site" description="O-linked (GalNAc...) threonine" evidence="2">
    <location>
        <position position="4142"/>
    </location>
</feature>
<feature type="glycosylation site" description="O-linked (GalNAc...) threonine" evidence="2">
    <location>
        <position position="4143"/>
    </location>
</feature>
<feature type="glycosylation site" description="O-linked (GalNAc...) threonine" evidence="2">
    <location>
        <position position="4148"/>
    </location>
</feature>
<feature type="glycosylation site" description="O-linked (GalNAc...) threonine" evidence="2">
    <location>
        <position position="4158"/>
    </location>
</feature>
<feature type="glycosylation site" description="O-linked (GalNAc...) threonine" evidence="2">
    <location>
        <position position="4159"/>
    </location>
</feature>
<feature type="glycosylation site" description="O-linked (GalNAc...) threonine" evidence="2">
    <location>
        <position position="4164"/>
    </location>
</feature>
<feature type="glycosylation site" description="O-linked (GalNAc...) threonine" evidence="2">
    <location>
        <position position="4171"/>
    </location>
</feature>
<feature type="glycosylation site" description="O-linked (GalNAc...) threonine" evidence="2">
    <location>
        <position position="4175"/>
    </location>
</feature>
<feature type="glycosylation site" description="O-linked (GalNAc...) threonine" evidence="2">
    <location>
        <position position="4180"/>
    </location>
</feature>
<feature type="glycosylation site" description="O-linked (GalNAc...) threonine" evidence="2">
    <location>
        <position position="4182"/>
    </location>
</feature>
<feature type="glycosylation site" description="O-linked (GalNAc...) threonine" evidence="2">
    <location>
        <position position="4187"/>
    </location>
</feature>
<feature type="glycosylation site" description="O-linked (GalNAc...) threonine" evidence="2">
    <location>
        <position position="4190"/>
    </location>
</feature>
<feature type="glycosylation site" description="O-linked (GalNAc...) threonine" evidence="2">
    <location>
        <position position="4191"/>
    </location>
</feature>
<feature type="glycosylation site" description="O-linked (GalNAc...) threonine" evidence="2">
    <location>
        <position position="4196"/>
    </location>
</feature>
<feature type="glycosylation site" description="O-linked (GalNAc...) threonine" evidence="2">
    <location>
        <position position="4198"/>
    </location>
</feature>
<feature type="glycosylation site" description="O-linked (GalNAc...) threonine" evidence="2">
    <location>
        <position position="4203"/>
    </location>
</feature>
<feature type="glycosylation site" description="O-linked (GalNAc...) threonine" evidence="2">
    <location>
        <position position="4207"/>
    </location>
</feature>
<feature type="glycosylation site" description="O-linked (GalNAc...) threonine" evidence="2">
    <location>
        <position position="4212"/>
    </location>
</feature>
<feature type="glycosylation site" description="O-linked (GalNAc...) threonine" evidence="2">
    <location>
        <position position="4214"/>
    </location>
</feature>
<feature type="glycosylation site" description="O-linked (GalNAc...) threonine" evidence="2">
    <location>
        <position position="4219"/>
    </location>
</feature>
<feature type="glycosylation site" description="O-linked (GalNAc...) threonine" evidence="2">
    <location>
        <position position="4223"/>
    </location>
</feature>
<feature type="glycosylation site" description="O-linked (GalNAc...) threonine" evidence="2">
    <location>
        <position position="4239"/>
    </location>
</feature>
<feature type="glycosylation site" description="O-linked (GalNAc...) threonine" evidence="2">
    <location>
        <position position="4272"/>
    </location>
</feature>
<feature type="glycosylation site" description="O-linked (GalNAc...) threonine" evidence="2">
    <location>
        <position position="4278"/>
    </location>
</feature>
<feature type="glycosylation site" description="O-linked (GalNAc...) threonine" evidence="2">
    <location>
        <position position="4280"/>
    </location>
</feature>
<feature type="glycosylation site" description="O-linked (GalNAc...) threonine" evidence="2">
    <location>
        <position position="4289"/>
    </location>
</feature>
<feature type="glycosylation site" description="O-linked (GalNAc...) threonine" evidence="2">
    <location>
        <position position="4293"/>
    </location>
</feature>
<feature type="glycosylation site" description="O-linked (GalNAc...) threonine" evidence="2">
    <location>
        <position position="4297"/>
    </location>
</feature>
<feature type="glycosylation site" description="N-linked (GlcNAc...) asparagine" evidence="5">
    <location>
        <position position="4715"/>
    </location>
</feature>
<feature type="glycosylation site" description="N-linked (GlcNAc...) asparagine" evidence="5">
    <location>
        <position position="4768"/>
    </location>
</feature>
<feature type="glycosylation site" description="N-linked (GlcNAc...) asparagine" evidence="5">
    <location>
        <position position="4787"/>
    </location>
</feature>
<feature type="glycosylation site" description="N-linked (GlcNAc...) asparagine" evidence="5">
    <location>
        <position position="4796"/>
    </location>
</feature>
<feature type="glycosylation site" description="N-linked (GlcNAc...) asparagine" evidence="5">
    <location>
        <position position="4831"/>
    </location>
</feature>
<feature type="glycosylation site" description="N-linked (GlcNAc...) asparagine" evidence="5">
    <location>
        <position position="4852"/>
    </location>
</feature>
<feature type="glycosylation site" description="N-linked (GlcNAc...) asparagine" evidence="5">
    <location>
        <position position="4875"/>
    </location>
</feature>
<feature type="glycosylation site" description="N-linked (GlcNAc...) asparagine" evidence="5">
    <location>
        <position position="4902"/>
    </location>
</feature>
<feature type="glycosylation site" description="N-linked (GlcNAc...) asparagine" evidence="5">
    <location>
        <position position="4928"/>
    </location>
</feature>
<feature type="glycosylation site" description="N-linked (GlcNAc...) asparagine" evidence="5">
    <location>
        <position position="4946"/>
    </location>
</feature>
<feature type="glycosylation site" description="N-linked (GlcNAc...) asparagine" evidence="5">
    <location>
        <position position="4982"/>
    </location>
</feature>
<feature type="glycosylation site" description="N-linked (GlcNAc...) asparagine" evidence="5">
    <location>
        <position position="4997"/>
    </location>
</feature>
<feature type="glycosylation site" description="N-linked (GlcNAc...) asparagine" evidence="5">
    <location>
        <position position="5045"/>
    </location>
</feature>
<feature type="glycosylation site" description="N-linked (GlcNAc...) asparagine" evidence="18">
    <location>
        <position position="5052"/>
    </location>
</feature>
<feature type="glycosylation site" description="N-linked (GlcNAc...) asparagine" evidence="5">
    <location>
        <position position="5100"/>
    </location>
</feature>
<feature type="glycosylation site" description="N-linked (GlcNAc...) asparagine" evidence="5">
    <location>
        <position position="5119"/>
    </location>
</feature>
<feature type="glycosylation site" description="N-linked (GlcNAc...) asparagine" evidence="5">
    <location>
        <position position="5185"/>
    </location>
</feature>
<feature type="glycosylation site" description="N-linked (GlcNAc...) asparagine" evidence="5">
    <location>
        <position position="5192"/>
    </location>
</feature>
<feature type="glycosylation site" description="N-linked (GlcNAc...) asparagine" evidence="5">
    <location>
        <position position="5292"/>
    </location>
</feature>
<feature type="disulfide bond" evidence="3">
    <location>
        <begin position="5122"/>
        <end position="5133"/>
    </location>
</feature>
<feature type="disulfide bond" evidence="3">
    <location>
        <begin position="5127"/>
        <end position="5145"/>
    </location>
</feature>
<feature type="disulfide bond" evidence="3">
    <location>
        <begin position="5147"/>
        <end position="5156"/>
    </location>
</feature>
<feature type="disulfide bond" evidence="3">
    <location>
        <begin position="5324"/>
        <end position="5335"/>
    </location>
</feature>
<feature type="disulfide bond" evidence="3">
    <location>
        <begin position="5329"/>
        <end position="5344"/>
    </location>
</feature>
<feature type="disulfide bond" evidence="3">
    <location>
        <begin position="5346"/>
        <end position="5359"/>
    </location>
</feature>
<feature type="splice variant" id="VSP_022650" description="In isoform 12." evidence="20">
    <location>
        <begin position="29"/>
        <end position="4315"/>
    </location>
</feature>
<feature type="splice variant" id="VSP_022651" description="In isoform 13." evidence="20">
    <location>
        <begin position="29"/>
        <end position="4264"/>
    </location>
</feature>
<feature type="splice variant" id="VSP_022652" description="In isoform 9." evidence="21">
    <original>RGVSLFPYGAGAGDLEFVRRTVDFTSPLFKPATGFPL</original>
    <variation>SPLWGRRRGPGVRQEDRGLHLPTLQAGDWLPPWLLSP</variation>
    <location>
        <begin position="4314"/>
        <end position="4350"/>
    </location>
</feature>
<feature type="splice variant" id="VSP_022653" description="In isoform 11." evidence="21">
    <original>VSLFPYGAGAGDLEFVRRTVDFTSPLFKPATGFPLGSSLRDSLYFTDNGQIIFPESDYQIFSYPNPLPTGFTGRDPVALVAPFWDDADFSTGRGTTFYQEYETFYGEHSLLVQQA</original>
    <variation>EAIQEFPSSPMGQTPGTWSSSGGPWTSPPHSSSRRLASPLAPLSVIPSTSQTMARSSSQSQTTRFSPTPTHSQQASQAGTLWPWWLRSGTMLTSPLVGGPHFIRNTRRSMVNTAC</variation>
    <location>
        <begin position="4316"/>
        <end position="4430"/>
    </location>
</feature>
<feature type="splice variant" id="VSP_022654" description="In isoform 15." evidence="22">
    <original>VSLFPYGAGAGDLEFVRRTVDFTSPLFKPATGFPLGSSLRDSLYFTDNGQIIFPESDYQIFSYPNPLPTGFTGRDPVALVAPFWDDADFSTGRGTTFYQEYETFY</original>
    <variation>AIQEFPSSPMGQTPGTWSSSGGPWTSPPHSSSRRLASPLAPLSVIPSTSQTMARSSSQSQTTRFSPTPTHSQQASQAGTLWPWWLRSGTMLTSPLVGGPHFIRL</variation>
    <location>
        <begin position="4316"/>
        <end position="4420"/>
    </location>
</feature>
<feature type="splice variant" id="VSP_022655" description="In isoform 9." evidence="21">
    <location>
        <begin position="4351"/>
        <end position="5412"/>
    </location>
</feature>
<feature type="splice variant" id="VSP_022656" description="In isoform 7." evidence="21">
    <original>FTDNGQIIFPESDYQIFSYPNPLPTGFTGRDPVALVAPFWDDADFSTGRGTTFYQEYETFYGEHSLLVQQAESWIRKMTNNGGYK</original>
    <variation>ASQAGTLWPWWLRSGTMLTSPLVGGPHFIRATPTKPSSPRTGAGPMPCFSTRAVGCSGTWPSAQWRWLFRKQPTDVPASVGEVSP</variation>
    <location>
        <begin position="4360"/>
        <end position="4444"/>
    </location>
</feature>
<feature type="splice variant" id="VSP_022657" description="In isoform 8." evidence="21">
    <original>FTDNGQIIFPESDYQIFSYPNPLPTGFTGRDPVALVAPFWDDADFSTGRGTTFYQEYETFYGEHSLLVQQAESWIRKMTNNGG</original>
    <variation>ASQAGTLWPWWLRSGTMLTSPLVGGPHFIRATPTKPSSPRTGAGPMPCFSTRAVGCSGTWPSAQASRCSWASLVEMAFSKTAH</variation>
    <location>
        <begin position="4360"/>
        <end position="4442"/>
    </location>
</feature>
<feature type="splice variant" id="VSP_022658" description="In isoform 2." evidence="21">
    <original>FTDNGQIIFPESDYQIFSYPNPLPTGFTGRDPVALVAPFWD</original>
    <variation>ASQAGTLWPWWLRSGTMLTSPLVGGPHFIRNTRRSMVNTAC</variation>
    <location>
        <begin position="4360"/>
        <end position="4400"/>
    </location>
</feature>
<feature type="splice variant" id="VSP_022659" description="In isoform 2." evidence="21">
    <location>
        <begin position="4401"/>
        <end position="5412"/>
    </location>
</feature>
<feature type="splice variant" id="VSP_022661" description="In isoform 5 and isoform 10." evidence="21">
    <location>
        <begin position="4415"/>
        <end position="4466"/>
    </location>
</feature>
<feature type="splice variant" id="VSP_022662" description="In isoform 15." evidence="22">
    <location>
        <begin position="4421"/>
        <end position="5412"/>
    </location>
</feature>
<feature type="splice variant" id="VSP_022663" description="In isoform 11." evidence="21">
    <location>
        <begin position="4431"/>
        <end position="5412"/>
    </location>
</feature>
<feature type="splice variant" id="VSP_022664" description="In isoform 8." evidence="21">
    <location>
        <begin position="4443"/>
        <end position="5412"/>
    </location>
</feature>
<feature type="splice variant" id="VSP_022665" description="In isoform 7." evidence="21">
    <location>
        <begin position="4445"/>
        <end position="5412"/>
    </location>
</feature>
<feature type="splice variant" id="VSP_022669" description="In isoform 5." evidence="21">
    <original>GNPVLMGFSS</original>
    <variation>VEMAFSKTAH</variation>
    <location>
        <begin position="4501"/>
        <end position="4510"/>
    </location>
</feature>
<feature type="splice variant" id="VSP_022670" description="In isoform 5." evidence="21">
    <location>
        <begin position="4511"/>
        <end position="5412"/>
    </location>
</feature>
<feature type="splice variant" id="VSP_022671" description="In isoform 16." evidence="22">
    <original>VSCPCSWQQGRRDLRFQPVSIGRWGLGSRQLCSFTSWRGGVCCSYGPWG</original>
    <variation>AAPPRLAQPRPPTSSPLRLSTAPAAWAPSRSNGSLSLTTQSVSCWITRL</variation>
    <location>
        <begin position="4579"/>
        <end position="4627"/>
    </location>
</feature>
<feature type="splice variant" id="VSP_022672" description="In isoform 17." evidence="22">
    <location>
        <begin position="4597"/>
        <end position="4822"/>
    </location>
</feature>
<feature type="splice variant" id="VSP_022673" description="In isoform 16." evidence="22">
    <location>
        <begin position="4628"/>
        <end position="5412"/>
    </location>
</feature>
<feature type="splice variant" id="VSP_022674" description="In isoform 3." evidence="21">
    <original>VAGCKCDGGTFGRY</original>
    <variation>LWGALSCVRTSPAL</variation>
    <location>
        <begin position="5057"/>
        <end position="5070"/>
    </location>
</feature>
<feature type="splice variant" id="VSP_022675" description="In isoform 3." evidence="21">
    <location>
        <begin position="5071"/>
        <end position="5412"/>
    </location>
</feature>
<feature type="sequence variant" id="VAR_030211" description="In dbSNP:rs2259292.">
    <original>G</original>
    <variation>D</variation>
    <location>
        <position position="37"/>
    </location>
</feature>
<feature type="sequence variant" id="VAR_065261" description="In dbSNP:rs3107764." evidence="11 12">
    <original>A</original>
    <variation>P</variation>
    <location>
        <position position="41"/>
    </location>
</feature>
<feature type="sequence variant" id="VAR_030212" description="In dbSNP:rs2293232.">
    <original>T</original>
    <variation>A</variation>
    <location>
        <position position="156"/>
    </location>
</feature>
<feature type="sequence variant" id="VAR_030213" description="In dbSNP:rs2246901.">
    <original>S</original>
    <variation>A</variation>
    <location>
        <position position="580"/>
    </location>
</feature>
<feature type="sequence variant" id="VAR_056585" description="In dbSNP:rs3749331.">
    <original>A</original>
    <variation>T</variation>
    <location>
        <position position="716"/>
    </location>
</feature>
<feature type="sequence variant" id="VAR_065262" description="In dbSNP:rs2259292." evidence="9 10 11 12 14">
    <original>G</original>
    <variation>D</variation>
    <location>
        <position position="4324"/>
    </location>
</feature>
<feature type="sequence variant" id="VAR_056586" description="In dbSNP:rs2293232.">
    <original>A</original>
    <variation>T</variation>
    <location>
        <position position="4448"/>
    </location>
</feature>
<feature type="sequence variant" id="VAR_056587" description="In dbSNP:rs2246901." evidence="12">
    <original>A</original>
    <variation>S</variation>
    <location>
        <position position="4821"/>
    </location>
</feature>
<feature type="sequence conflict" description="In Ref. 2; CAB81773." evidence="22" ref="2">
    <original>M</original>
    <variation>METVTQ</variation>
    <location>
        <position position="111"/>
    </location>
</feature>
<feature type="sequence conflict" description="In Ref. 2; CAB81773." evidence="22" ref="2">
    <original>F</original>
    <variation>V</variation>
    <location>
        <position position="300"/>
    </location>
</feature>
<feature type="sequence conflict" description="In Ref. 2; CAB81773." evidence="22" ref="2">
    <original>T</original>
    <variation>I</variation>
    <location>
        <position position="377"/>
    </location>
</feature>
<feature type="sequence conflict" description="In Ref. 2; CAB81773." evidence="22" ref="2">
    <original>T</original>
    <variation>I</variation>
    <location>
        <position position="398"/>
    </location>
</feature>
<feature type="sequence conflict" description="In Ref. 2; CAB81773." evidence="22" ref="2">
    <original>GT</original>
    <variation>RA</variation>
    <location>
        <begin position="524"/>
        <end position="525"/>
    </location>
</feature>
<feature type="sequence conflict" description="In Ref. 2; CAB81773." evidence="22" ref="2">
    <original>T</original>
    <variation>I</variation>
    <location>
        <position position="587"/>
    </location>
</feature>
<feature type="sequence conflict" description="In Ref. 2; CAB81773." evidence="22" ref="2">
    <original>Q</original>
    <variation>R</variation>
    <location>
        <position position="641"/>
    </location>
</feature>
<feature type="sequence conflict" description="In Ref. 2; CAB81773." evidence="22" ref="2">
    <original>D</original>
    <variation>N</variation>
    <location>
        <position position="702"/>
    </location>
</feature>
<feature type="sequence conflict" description="In Ref. 2; CAB81773." evidence="22" ref="2">
    <original>R</original>
    <variation>G</variation>
    <location>
        <position position="914"/>
    </location>
</feature>
<feature type="sequence conflict" description="In Ref. 2; CAB81773." evidence="22" ref="2">
    <original>T</original>
    <variation>S</variation>
    <location>
        <position position="945"/>
    </location>
</feature>
<feature type="sequence conflict" description="In Ref. 2; CAB81773." evidence="22" ref="2">
    <original>E</original>
    <variation>Q</variation>
    <location>
        <position position="953"/>
    </location>
</feature>
<feature type="sequence conflict" description="In Ref. 2; CAB81773." evidence="22" ref="2">
    <original>P</original>
    <variation>S</variation>
    <location>
        <position position="4263"/>
    </location>
</feature>
<feature type="sequence conflict" description="In Ref. 1; CAB85602/CAB85603/CAB85604/CAB85605/CAB85606, 2; CAB81773/CAC14141/CAC14142/CAC14143, 3; AAM66747, 4; CAD22550 and 5; CAB38059." evidence="22" ref="1 2 3 4 5">
    <original>M</original>
    <variation>I</variation>
    <location>
        <position position="4437"/>
    </location>
</feature>
<feature type="sequence conflict" description="In Ref. 2; CAB81773/CAC14143/CAC10061 and 3; AAM66747." evidence="22" ref="2 3">
    <original>N</original>
    <variation>K</variation>
    <location>
        <position position="4502"/>
    </location>
</feature>
<feature type="sequence conflict" description="In Ref. 2; CAB81773/CAC14143/CAC10061 and 3; AAM66747." evidence="22" ref="2 3">
    <original>Y</original>
    <variation>F</variation>
    <location>
        <position position="4514"/>
    </location>
</feature>
<feature type="sequence conflict" description="In Ref. 2; CAB81773/CAC14143/CAC10061 and 3; AAM66747." evidence="22" ref="2 3">
    <original>R</original>
    <variation>G</variation>
    <location>
        <position position="4548"/>
    </location>
</feature>
<feature type="sequence conflict" description="In Ref. 2; CAB81773/CAC14143/CAC10061 and 3; AAM66747." evidence="22" ref="2 3">
    <original>V</original>
    <variation>A</variation>
    <location>
        <position position="4800"/>
    </location>
</feature>
<feature type="sequence conflict" description="In Ref. 2; CAC14143." evidence="22" ref="2">
    <location>
        <begin position="5163"/>
        <end position="5164"/>
    </location>
</feature>
<feature type="sequence conflict" description="In Ref. 1; CAB85604/CAB85605/CAB85606, 4; CAD22550 and 5; CAB38059." evidence="22" ref="1 4 5">
    <original>G</original>
    <variation>E</variation>
    <location>
        <position position="5282"/>
    </location>
</feature>
<proteinExistence type="evidence at protein level"/>
<dbReference type="EMBL" id="AJ242541">
    <property type="protein sequence ID" value="CAB85597.1"/>
    <property type="molecule type" value="mRNA"/>
</dbReference>
<dbReference type="EMBL" id="AJ242542">
    <property type="protein sequence ID" value="CAB85598.1"/>
    <property type="molecule type" value="mRNA"/>
</dbReference>
<dbReference type="EMBL" id="AJ242543">
    <property type="protein sequence ID" value="CAB85599.1"/>
    <property type="molecule type" value="mRNA"/>
</dbReference>
<dbReference type="EMBL" id="AJ242544">
    <property type="protein sequence ID" value="CAB85600.1"/>
    <property type="molecule type" value="mRNA"/>
</dbReference>
<dbReference type="EMBL" id="AJ242545">
    <property type="protein sequence ID" value="CAB85601.1"/>
    <property type="molecule type" value="mRNA"/>
</dbReference>
<dbReference type="EMBL" id="AJ242546">
    <property type="protein sequence ID" value="CAB85602.1"/>
    <property type="molecule type" value="mRNA"/>
</dbReference>
<dbReference type="EMBL" id="AJ242547">
    <property type="protein sequence ID" value="CAB85603.1"/>
    <property type="molecule type" value="mRNA"/>
</dbReference>
<dbReference type="EMBL" id="AJ242548">
    <property type="protein sequence ID" value="CAB85604.1"/>
    <property type="molecule type" value="mRNA"/>
</dbReference>
<dbReference type="EMBL" id="AJ242549">
    <property type="protein sequence ID" value="CAB85605.1"/>
    <property type="molecule type" value="mRNA"/>
</dbReference>
<dbReference type="EMBL" id="AJ242550">
    <property type="protein sequence ID" value="CAB85606.1"/>
    <property type="molecule type" value="mRNA"/>
</dbReference>
<dbReference type="EMBL" id="AJ276359">
    <property type="protein sequence ID" value="CAB81773.1"/>
    <property type="molecule type" value="mRNA"/>
</dbReference>
<dbReference type="EMBL" id="AJ277412">
    <property type="protein sequence ID" value="CAC10061.1"/>
    <property type="molecule type" value="mRNA"/>
</dbReference>
<dbReference type="EMBL" id="AJ277505">
    <property type="protein sequence ID" value="CAC14585.1"/>
    <property type="molecule type" value="mRNA"/>
</dbReference>
<dbReference type="EMBL" id="AJ400633">
    <property type="protein sequence ID" value="CAC10062.1"/>
    <property type="molecule type" value="mRNA"/>
</dbReference>
<dbReference type="EMBL" id="AJ400849">
    <property type="protein sequence ID" value="CAC14134.1"/>
    <property type="molecule type" value="mRNA"/>
</dbReference>
<dbReference type="EMBL" id="AJ400850">
    <property type="protein sequence ID" value="CAC14135.1"/>
    <property type="molecule type" value="mRNA"/>
</dbReference>
<dbReference type="EMBL" id="AJ400851">
    <property type="protein sequence ID" value="CAC14136.1"/>
    <property type="molecule type" value="mRNA"/>
</dbReference>
<dbReference type="EMBL" id="AJ400852">
    <property type="protein sequence ID" value="CAC14137.1"/>
    <property type="molecule type" value="mRNA"/>
</dbReference>
<dbReference type="EMBL" id="AJ400855">
    <property type="protein sequence ID" value="CAC14140.1"/>
    <property type="molecule type" value="mRNA"/>
</dbReference>
<dbReference type="EMBL" id="AJ400853">
    <property type="protein sequence ID" value="CAC14138.1"/>
    <property type="molecule type" value="mRNA"/>
</dbReference>
<dbReference type="EMBL" id="AJ400854">
    <property type="protein sequence ID" value="CAC14139.1"/>
    <property type="status" value="ALT_FRAME"/>
    <property type="molecule type" value="mRNA"/>
</dbReference>
<dbReference type="EMBL" id="AJ400856">
    <property type="protein sequence ID" value="CAC14141.1"/>
    <property type="status" value="ALT_FRAME"/>
    <property type="molecule type" value="mRNA"/>
</dbReference>
<dbReference type="EMBL" id="AJ400857">
    <property type="protein sequence ID" value="CAC14142.1"/>
    <property type="molecule type" value="mRNA"/>
</dbReference>
<dbReference type="EMBL" id="AJ400858">
    <property type="protein sequence ID" value="CAC14143.1"/>
    <property type="molecule type" value="mRNA"/>
</dbReference>
<dbReference type="EMBL" id="AF522055">
    <property type="protein sequence ID" value="AAM66747.1"/>
    <property type="molecule type" value="Genomic_DNA"/>
</dbReference>
<dbReference type="EMBL" id="AF522031">
    <property type="protein sequence ID" value="AAM66747.1"/>
    <property type="status" value="JOINED"/>
    <property type="molecule type" value="Genomic_DNA"/>
</dbReference>
<dbReference type="EMBL" id="AF522032">
    <property type="protein sequence ID" value="AAM66747.1"/>
    <property type="status" value="JOINED"/>
    <property type="molecule type" value="Genomic_DNA"/>
</dbReference>
<dbReference type="EMBL" id="AF522033">
    <property type="protein sequence ID" value="AAM66747.1"/>
    <property type="status" value="JOINED"/>
    <property type="molecule type" value="Genomic_DNA"/>
</dbReference>
<dbReference type="EMBL" id="AF522034">
    <property type="protein sequence ID" value="AAM66747.1"/>
    <property type="status" value="JOINED"/>
    <property type="molecule type" value="Genomic_DNA"/>
</dbReference>
<dbReference type="EMBL" id="AF522035">
    <property type="protein sequence ID" value="AAM66747.1"/>
    <property type="status" value="JOINED"/>
    <property type="molecule type" value="Genomic_DNA"/>
</dbReference>
<dbReference type="EMBL" id="AF522036">
    <property type="protein sequence ID" value="AAM66747.1"/>
    <property type="status" value="JOINED"/>
    <property type="molecule type" value="Genomic_DNA"/>
</dbReference>
<dbReference type="EMBL" id="AF522037">
    <property type="protein sequence ID" value="AAM66747.1"/>
    <property type="status" value="JOINED"/>
    <property type="molecule type" value="Genomic_DNA"/>
</dbReference>
<dbReference type="EMBL" id="AF522038">
    <property type="protein sequence ID" value="AAM66747.1"/>
    <property type="status" value="JOINED"/>
    <property type="molecule type" value="Genomic_DNA"/>
</dbReference>
<dbReference type="EMBL" id="AF522039">
    <property type="protein sequence ID" value="AAM66747.1"/>
    <property type="status" value="JOINED"/>
    <property type="molecule type" value="Genomic_DNA"/>
</dbReference>
<dbReference type="EMBL" id="AF522040">
    <property type="protein sequence ID" value="AAM66747.1"/>
    <property type="status" value="JOINED"/>
    <property type="molecule type" value="Genomic_DNA"/>
</dbReference>
<dbReference type="EMBL" id="AF522041">
    <property type="protein sequence ID" value="AAM66747.1"/>
    <property type="status" value="JOINED"/>
    <property type="molecule type" value="Genomic_DNA"/>
</dbReference>
<dbReference type="EMBL" id="AF522042">
    <property type="protein sequence ID" value="AAM66747.1"/>
    <property type="status" value="JOINED"/>
    <property type="molecule type" value="Genomic_DNA"/>
</dbReference>
<dbReference type="EMBL" id="AF522043">
    <property type="protein sequence ID" value="AAM66747.1"/>
    <property type="status" value="JOINED"/>
    <property type="molecule type" value="Genomic_DNA"/>
</dbReference>
<dbReference type="EMBL" id="AF522044">
    <property type="protein sequence ID" value="AAM66747.1"/>
    <property type="status" value="JOINED"/>
    <property type="molecule type" value="Genomic_DNA"/>
</dbReference>
<dbReference type="EMBL" id="AF522045">
    <property type="protein sequence ID" value="AAM66747.1"/>
    <property type="status" value="JOINED"/>
    <property type="molecule type" value="Genomic_DNA"/>
</dbReference>
<dbReference type="EMBL" id="AF522046">
    <property type="protein sequence ID" value="AAM66747.1"/>
    <property type="status" value="JOINED"/>
    <property type="molecule type" value="Genomic_DNA"/>
</dbReference>
<dbReference type="EMBL" id="AF522047">
    <property type="protein sequence ID" value="AAM66747.1"/>
    <property type="status" value="JOINED"/>
    <property type="molecule type" value="Genomic_DNA"/>
</dbReference>
<dbReference type="EMBL" id="AF522048">
    <property type="protein sequence ID" value="AAM66747.1"/>
    <property type="status" value="JOINED"/>
    <property type="molecule type" value="Genomic_DNA"/>
</dbReference>
<dbReference type="EMBL" id="AF522049">
    <property type="protein sequence ID" value="AAM66747.1"/>
    <property type="status" value="JOINED"/>
    <property type="molecule type" value="Genomic_DNA"/>
</dbReference>
<dbReference type="EMBL" id="AF522050">
    <property type="protein sequence ID" value="AAM66747.1"/>
    <property type="status" value="JOINED"/>
    <property type="molecule type" value="Genomic_DNA"/>
</dbReference>
<dbReference type="EMBL" id="AF522051">
    <property type="protein sequence ID" value="AAM66747.1"/>
    <property type="status" value="JOINED"/>
    <property type="molecule type" value="Genomic_DNA"/>
</dbReference>
<dbReference type="EMBL" id="AF522052">
    <property type="protein sequence ID" value="AAM66747.1"/>
    <property type="status" value="JOINED"/>
    <property type="molecule type" value="Genomic_DNA"/>
</dbReference>
<dbReference type="EMBL" id="AF522053">
    <property type="protein sequence ID" value="AAM66747.1"/>
    <property type="status" value="JOINED"/>
    <property type="molecule type" value="Genomic_DNA"/>
</dbReference>
<dbReference type="EMBL" id="AF522054">
    <property type="protein sequence ID" value="AAM66747.1"/>
    <property type="status" value="JOINED"/>
    <property type="molecule type" value="Genomic_DNA"/>
</dbReference>
<dbReference type="EMBL" id="AJ010901">
    <property type="protein sequence ID" value="CAB38059.1"/>
    <property type="molecule type" value="mRNA"/>
</dbReference>
<dbReference type="EMBL" id="AJ430032">
    <property type="protein sequence ID" value="CAD22550.1"/>
    <property type="molecule type" value="Genomic_DNA"/>
</dbReference>
<dbReference type="EMBL" id="AJ430033">
    <property type="protein sequence ID" value="CAD22550.1"/>
    <property type="status" value="JOINED"/>
    <property type="molecule type" value="Genomic_DNA"/>
</dbReference>
<dbReference type="EMBL" id="AJ430034">
    <property type="protein sequence ID" value="CAD22550.1"/>
    <property type="status" value="JOINED"/>
    <property type="molecule type" value="Genomic_DNA"/>
</dbReference>
<dbReference type="EMBL" id="M64594">
    <property type="protein sequence ID" value="AAA63230.1"/>
    <property type="status" value="ALT_SEQ"/>
    <property type="molecule type" value="mRNA"/>
</dbReference>
<dbReference type="EMBL" id="AC069513">
    <property type="status" value="NOT_ANNOTATED_CDS"/>
    <property type="molecule type" value="Genomic_DNA"/>
</dbReference>
<dbReference type="EMBL" id="AC233280">
    <property type="status" value="NOT_ANNOTATED_CDS"/>
    <property type="molecule type" value="Genomic_DNA"/>
</dbReference>
<dbReference type="CCDS" id="CCDS3310.1">
    <molecule id="Q99102-13"/>
</dbReference>
<dbReference type="CCDS" id="CCDS3311.1">
    <molecule id="Q99102-12"/>
</dbReference>
<dbReference type="CCDS" id="CCDS54700.1">
    <molecule id="Q99102-1"/>
</dbReference>
<dbReference type="PIR" id="PN0012">
    <property type="entry name" value="PN0012"/>
</dbReference>
<dbReference type="RefSeq" id="NP_004523.3">
    <molecule id="Q99102-13"/>
    <property type="nucleotide sequence ID" value="NM_004532.5"/>
</dbReference>
<dbReference type="RefSeq" id="NP_060876.5">
    <molecule id="Q99102-1"/>
    <property type="nucleotide sequence ID" value="NM_018406.6"/>
</dbReference>
<dbReference type="RefSeq" id="NP_612154.2">
    <molecule id="Q99102-12"/>
    <property type="nucleotide sequence ID" value="NM_138297.5"/>
</dbReference>
<dbReference type="BioGRID" id="110672">
    <property type="interactions" value="8"/>
</dbReference>
<dbReference type="FunCoup" id="Q99102">
    <property type="interactions" value="15"/>
</dbReference>
<dbReference type="IntAct" id="Q99102">
    <property type="interactions" value="1"/>
</dbReference>
<dbReference type="STRING" id="9606.ENSP00000417498"/>
<dbReference type="GlyConnect" id="374">
    <property type="glycosylation" value="7 N-Linked glycans (3 sites), 8 O-Linked glycans"/>
</dbReference>
<dbReference type="GlyCosmos" id="Q99102">
    <property type="glycosylation" value="550 sites, 26 glycans"/>
</dbReference>
<dbReference type="GlyGen" id="Q99102">
    <property type="glycosylation" value="549 sites, 17 O-linked glycans (1 site)"/>
</dbReference>
<dbReference type="iPTMnet" id="Q99102"/>
<dbReference type="PhosphoSitePlus" id="Q99102"/>
<dbReference type="BioMuta" id="MUC4"/>
<dbReference type="DMDM" id="338817990"/>
<dbReference type="jPOST" id="Q99102"/>
<dbReference type="MassIVE" id="Q99102"/>
<dbReference type="PaxDb" id="9606-ENSP00000417498"/>
<dbReference type="PeptideAtlas" id="Q99102"/>
<dbReference type="ProteomicsDB" id="78234">
    <molecule id="Q99102-1"/>
</dbReference>
<dbReference type="ProteomicsDB" id="78235">
    <molecule id="Q99102-10"/>
</dbReference>
<dbReference type="ProteomicsDB" id="78236">
    <molecule id="Q99102-11"/>
</dbReference>
<dbReference type="ProteomicsDB" id="78237">
    <molecule id="Q99102-12"/>
</dbReference>
<dbReference type="ProteomicsDB" id="78238">
    <molecule id="Q99102-13"/>
</dbReference>
<dbReference type="ProteomicsDB" id="78239">
    <molecule id="Q99102-15"/>
</dbReference>
<dbReference type="ProteomicsDB" id="78240">
    <molecule id="Q99102-16"/>
</dbReference>
<dbReference type="ProteomicsDB" id="78241">
    <molecule id="Q99102-17"/>
</dbReference>
<dbReference type="ProteomicsDB" id="78242">
    <molecule id="Q99102-2"/>
</dbReference>
<dbReference type="ProteomicsDB" id="78243">
    <molecule id="Q99102-3"/>
</dbReference>
<dbReference type="ProteomicsDB" id="78244">
    <molecule id="Q99102-5"/>
</dbReference>
<dbReference type="ProteomicsDB" id="78245">
    <molecule id="Q99102-7"/>
</dbReference>
<dbReference type="ProteomicsDB" id="78246">
    <molecule id="Q99102-8"/>
</dbReference>
<dbReference type="ProteomicsDB" id="78247">
    <molecule id="Q99102-9"/>
</dbReference>
<dbReference type="TopDownProteomics" id="Q99102-3">
    <molecule id="Q99102-3"/>
</dbReference>
<dbReference type="Antibodypedia" id="1457">
    <property type="antibodies" value="383 antibodies from 39 providers"/>
</dbReference>
<dbReference type="DNASU" id="4585"/>
<dbReference type="Ensembl" id="ENST00000346145.8">
    <molecule id="Q99102-13"/>
    <property type="protein sequence ID" value="ENSP00000304207.6"/>
    <property type="gene ID" value="ENSG00000145113.22"/>
</dbReference>
<dbReference type="Ensembl" id="ENST00000349607.8">
    <molecule id="Q99102-12"/>
    <property type="protein sequence ID" value="ENSP00000338109.4"/>
    <property type="gene ID" value="ENSG00000145113.22"/>
</dbReference>
<dbReference type="Ensembl" id="ENST00000463781.8">
    <molecule id="Q99102-1"/>
    <property type="protein sequence ID" value="ENSP00000417498.3"/>
    <property type="gene ID" value="ENSG00000145113.22"/>
</dbReference>
<dbReference type="Ensembl" id="ENST00000470451.5">
    <molecule id="Q99102-7"/>
    <property type="protein sequence ID" value="ENSP00000420439.1"/>
    <property type="gene ID" value="ENSG00000145113.22"/>
</dbReference>
<dbReference type="Ensembl" id="ENST00000475231.5">
    <molecule id="Q99102-10"/>
    <property type="protein sequence ID" value="ENSP00000420243.1"/>
    <property type="gene ID" value="ENSG00000145113.22"/>
</dbReference>
<dbReference type="Ensembl" id="ENST00000477086.5">
    <molecule id="Q99102-2"/>
    <property type="protein sequence ID" value="ENSP00000419989.1"/>
    <property type="gene ID" value="ENSG00000145113.22"/>
</dbReference>
<dbReference type="Ensembl" id="ENST00000478156.5">
    <molecule id="Q99102-3"/>
    <property type="protein sequence ID" value="ENSP00000419798.1"/>
    <property type="gene ID" value="ENSG00000145113.22"/>
</dbReference>
<dbReference type="GeneID" id="4585"/>
<dbReference type="KEGG" id="hsa:4585"/>
<dbReference type="MANE-Select" id="ENST00000463781.8">
    <property type="protein sequence ID" value="ENSP00000417498.3"/>
    <property type="RefSeq nucleotide sequence ID" value="NM_018406.7"/>
    <property type="RefSeq protein sequence ID" value="NP_060876.5"/>
</dbReference>
<dbReference type="UCSC" id="uc003fvo.5">
    <molecule id="Q99102-1"/>
    <property type="organism name" value="human"/>
</dbReference>
<dbReference type="AGR" id="HGNC:7514"/>
<dbReference type="CTD" id="4585"/>
<dbReference type="DisGeNET" id="4585"/>
<dbReference type="GeneCards" id="MUC4"/>
<dbReference type="HGNC" id="HGNC:7514">
    <property type="gene designation" value="MUC4"/>
</dbReference>
<dbReference type="HPA" id="ENSG00000145113">
    <property type="expression patterns" value="Tissue enhanced (esophagus, intestine, prostate, vagina)"/>
</dbReference>
<dbReference type="MIM" id="158372">
    <property type="type" value="gene"/>
</dbReference>
<dbReference type="neXtProt" id="NX_Q99102"/>
<dbReference type="OpenTargets" id="ENSG00000145113"/>
<dbReference type="PharmGKB" id="PA31319"/>
<dbReference type="VEuPathDB" id="HostDB:ENSG00000145113"/>
<dbReference type="eggNOG" id="ENOG502QUJ0">
    <property type="taxonomic scope" value="Eukaryota"/>
</dbReference>
<dbReference type="GeneTree" id="ENSGT00730000110943"/>
<dbReference type="HOGENOM" id="CLU_001484_0_0_1"/>
<dbReference type="InParanoid" id="Q99102"/>
<dbReference type="OMA" id="FITTASY"/>
<dbReference type="OrthoDB" id="9479468at2759"/>
<dbReference type="PAN-GO" id="Q99102">
    <property type="GO annotations" value="3 GO annotations based on evolutionary models"/>
</dbReference>
<dbReference type="PathwayCommons" id="Q99102"/>
<dbReference type="Reactome" id="R-HSA-5083625">
    <property type="pathway name" value="Defective GALNT3 causes HFTC"/>
</dbReference>
<dbReference type="Reactome" id="R-HSA-5083632">
    <property type="pathway name" value="Defective C1GALT1C1 causes TNPS"/>
</dbReference>
<dbReference type="Reactome" id="R-HSA-5083636">
    <property type="pathway name" value="Defective GALNT12 causes CRCS1"/>
</dbReference>
<dbReference type="Reactome" id="R-HSA-5621480">
    <property type="pathway name" value="Dectin-2 family"/>
</dbReference>
<dbReference type="Reactome" id="R-HSA-913709">
    <property type="pathway name" value="O-linked glycosylation of mucins"/>
</dbReference>
<dbReference type="Reactome" id="R-HSA-977068">
    <property type="pathway name" value="Termination of O-glycan biosynthesis"/>
</dbReference>
<dbReference type="SignaLink" id="Q99102"/>
<dbReference type="SIGNOR" id="Q99102"/>
<dbReference type="BioGRID-ORCS" id="4585">
    <property type="hits" value="12 hits in 1154 CRISPR screens"/>
</dbReference>
<dbReference type="ChiTaRS" id="MUC4">
    <property type="organism name" value="human"/>
</dbReference>
<dbReference type="GeneWiki" id="MUC4"/>
<dbReference type="GenomeRNAi" id="4585"/>
<dbReference type="Pharos" id="Q99102">
    <property type="development level" value="Tbio"/>
</dbReference>
<dbReference type="PRO" id="PR:Q99102"/>
<dbReference type="Proteomes" id="UP000005640">
    <property type="component" value="Chromosome 3"/>
</dbReference>
<dbReference type="RNAct" id="Q99102">
    <property type="molecule type" value="protein"/>
</dbReference>
<dbReference type="Bgee" id="ENSG00000145113">
    <property type="expression patterns" value="Expressed in olfactory segment of nasal mucosa and 114 other cell types or tissues"/>
</dbReference>
<dbReference type="ExpressionAtlas" id="Q99102">
    <property type="expression patterns" value="baseline and differential"/>
</dbReference>
<dbReference type="GO" id="GO:0070062">
    <property type="term" value="C:extracellular exosome"/>
    <property type="evidence" value="ECO:0007005"/>
    <property type="project" value="UniProtKB"/>
</dbReference>
<dbReference type="GO" id="GO:0031012">
    <property type="term" value="C:extracellular matrix"/>
    <property type="evidence" value="ECO:0000303"/>
    <property type="project" value="UniProtKB"/>
</dbReference>
<dbReference type="GO" id="GO:0005615">
    <property type="term" value="C:extracellular space"/>
    <property type="evidence" value="ECO:0007005"/>
    <property type="project" value="UniProtKB"/>
</dbReference>
<dbReference type="GO" id="GO:0005796">
    <property type="term" value="C:Golgi lumen"/>
    <property type="evidence" value="ECO:0000304"/>
    <property type="project" value="Reactome"/>
</dbReference>
<dbReference type="GO" id="GO:0016020">
    <property type="term" value="C:membrane"/>
    <property type="evidence" value="ECO:0000303"/>
    <property type="project" value="UniProtKB"/>
</dbReference>
<dbReference type="GO" id="GO:0005886">
    <property type="term" value="C:plasma membrane"/>
    <property type="evidence" value="ECO:0000304"/>
    <property type="project" value="Reactome"/>
</dbReference>
<dbReference type="GO" id="GO:0031982">
    <property type="term" value="C:vesicle"/>
    <property type="evidence" value="ECO:0007005"/>
    <property type="project" value="UniProtKB"/>
</dbReference>
<dbReference type="GO" id="GO:0005176">
    <property type="term" value="F:ErbB-2 class receptor binding"/>
    <property type="evidence" value="ECO:0000318"/>
    <property type="project" value="GO_Central"/>
</dbReference>
<dbReference type="GO" id="GO:0030197">
    <property type="term" value="F:extracellular matrix constituent, lubricant activity"/>
    <property type="evidence" value="ECO:0000303"/>
    <property type="project" value="UniProtKB"/>
</dbReference>
<dbReference type="GO" id="GO:0007160">
    <property type="term" value="P:cell-matrix adhesion"/>
    <property type="evidence" value="ECO:0007669"/>
    <property type="project" value="InterPro"/>
</dbReference>
<dbReference type="GO" id="GO:0030277">
    <property type="term" value="P:maintenance of gastrointestinal epithelium"/>
    <property type="evidence" value="ECO:0000315"/>
    <property type="project" value="UniProtKB"/>
</dbReference>
<dbReference type="CDD" id="cd00053">
    <property type="entry name" value="EGF"/>
    <property type="match status" value="1"/>
</dbReference>
<dbReference type="InterPro" id="IPR005533">
    <property type="entry name" value="AMOP_dom"/>
</dbReference>
<dbReference type="InterPro" id="IPR056619">
    <property type="entry name" value="C8-3_MUC4"/>
</dbReference>
<dbReference type="InterPro" id="IPR000742">
    <property type="entry name" value="EGF-like_dom"/>
</dbReference>
<dbReference type="InterPro" id="IPR051495">
    <property type="entry name" value="Epithelial_Barrier/Signaling"/>
</dbReference>
<dbReference type="InterPro" id="IPR003886">
    <property type="entry name" value="NIDO_dom"/>
</dbReference>
<dbReference type="InterPro" id="IPR001846">
    <property type="entry name" value="VWF_type-D"/>
</dbReference>
<dbReference type="PANTHER" id="PTHR13802">
    <property type="entry name" value="MUCIN 4-RELATED"/>
    <property type="match status" value="1"/>
</dbReference>
<dbReference type="PANTHER" id="PTHR13802:SF52">
    <property type="entry name" value="MUCIN-4"/>
    <property type="match status" value="1"/>
</dbReference>
<dbReference type="Pfam" id="PF23263">
    <property type="entry name" value="C8-3_MUC4"/>
    <property type="match status" value="1"/>
</dbReference>
<dbReference type="Pfam" id="PF06119">
    <property type="entry name" value="NIDO"/>
    <property type="match status" value="1"/>
</dbReference>
<dbReference type="Pfam" id="PF00094">
    <property type="entry name" value="VWD"/>
    <property type="match status" value="1"/>
</dbReference>
<dbReference type="SMART" id="SM00723">
    <property type="entry name" value="AMOP"/>
    <property type="match status" value="1"/>
</dbReference>
<dbReference type="SMART" id="SM00181">
    <property type="entry name" value="EGF"/>
    <property type="match status" value="3"/>
</dbReference>
<dbReference type="SMART" id="SM00539">
    <property type="entry name" value="NIDO"/>
    <property type="match status" value="1"/>
</dbReference>
<dbReference type="SMART" id="SM00216">
    <property type="entry name" value="VWD"/>
    <property type="match status" value="1"/>
</dbReference>
<dbReference type="PROSITE" id="PS50856">
    <property type="entry name" value="AMOP"/>
    <property type="match status" value="1"/>
</dbReference>
<dbReference type="PROSITE" id="PS00022">
    <property type="entry name" value="EGF_1"/>
    <property type="match status" value="1"/>
</dbReference>
<dbReference type="PROSITE" id="PS50026">
    <property type="entry name" value="EGF_3"/>
    <property type="match status" value="2"/>
</dbReference>
<dbReference type="PROSITE" id="PS51220">
    <property type="entry name" value="NIDO"/>
    <property type="match status" value="1"/>
</dbReference>
<dbReference type="PROSITE" id="PS51233">
    <property type="entry name" value="VWFD"/>
    <property type="match status" value="1"/>
</dbReference>
<evidence type="ECO:0000250" key="1">
    <source>
        <dbReference type="UniProtKB" id="Q63661"/>
    </source>
</evidence>
<evidence type="ECO:0000255" key="2"/>
<evidence type="ECO:0000255" key="3">
    <source>
        <dbReference type="PROSITE-ProRule" id="PRU00076"/>
    </source>
</evidence>
<evidence type="ECO:0000255" key="4">
    <source>
        <dbReference type="PROSITE-ProRule" id="PRU00347"/>
    </source>
</evidence>
<evidence type="ECO:0000255" key="5">
    <source>
        <dbReference type="PROSITE-ProRule" id="PRU00498"/>
    </source>
</evidence>
<evidence type="ECO:0000255" key="6">
    <source>
        <dbReference type="PROSITE-ProRule" id="PRU00570"/>
    </source>
</evidence>
<evidence type="ECO:0000255" key="7">
    <source>
        <dbReference type="PROSITE-ProRule" id="PRU00580"/>
    </source>
</evidence>
<evidence type="ECO:0000256" key="8">
    <source>
        <dbReference type="SAM" id="MobiDB-lite"/>
    </source>
</evidence>
<evidence type="ECO:0000269" key="9">
    <source>
    </source>
</evidence>
<evidence type="ECO:0000269" key="10">
    <source>
    </source>
</evidence>
<evidence type="ECO:0000269" key="11">
    <source>
    </source>
</evidence>
<evidence type="ECO:0000269" key="12">
    <source>
    </source>
</evidence>
<evidence type="ECO:0000269" key="13">
    <source>
    </source>
</evidence>
<evidence type="ECO:0000269" key="14">
    <source>
    </source>
</evidence>
<evidence type="ECO:0000269" key="15">
    <source>
    </source>
</evidence>
<evidence type="ECO:0000269" key="16">
    <source>
    </source>
</evidence>
<evidence type="ECO:0000269" key="17">
    <source>
    </source>
</evidence>
<evidence type="ECO:0000269" key="18">
    <source>
    </source>
</evidence>
<evidence type="ECO:0000269" key="19">
    <source>
    </source>
</evidence>
<evidence type="ECO:0000303" key="20">
    <source>
    </source>
</evidence>
<evidence type="ECO:0000303" key="21">
    <source>
    </source>
</evidence>
<evidence type="ECO:0000305" key="22"/>
<evidence type="ECO:0000305" key="23">
    <source>
    </source>
</evidence>
<sequence>MKGARWRRVPWVSLSCLCLCLLPHVVPGTTEDTLITGSKTAAPVTSTGSTTATLEGQSTAASSRTSNQDISASSQNHQTKSTETTSKAQTDTLTQMMTSTLFSSPSVHNVMETAPPDEMTTSFPSSVTNTLMMTSKTITMTTSTDSTLGNTEETSTAGTESSTPVTSAVSITAGQEGQSRTTSWRTSIQDTSASSQNHWTRSTQTTRESQTSTLTHRTTSTPSFSPSVHNVTGTVSQKTSPSGETATSSLCSVTNTSMMTSEKITVTTSTGSTLGNPGETSSVPVTGSLMPVTSAALVTFDPEGQSPATFSRTSTQDTTAFSKNHQTQSVETTRVSQINTLNTLTPVTTSTVLSSPSGFNPSGTVSQETFPSGETTTSSPSSVSNTFLVTSKVFRMPTSRDSTLGNTEETSLSVSGTISAITSKVSTIWWSDTLSTALSPSSLPPKISTAFHTQQSEGAETTGRPHERSSFSPGVSQEIFTLHETTTWPSSFSSKGHTTWSQTELPSTSTGAATRLVTGNPSTGTAGTIPRVPSKVSAIGEPGEPTTYSSHSTTLPKTTGAGAQTQWTQETGTTGEALLSSPSYSVTQMIKTATSPSSSPMLDRHTSQQITTAPSTNHSTIHSTSTSPQESPAVSQRGHTQAPQTTQESQTTRSVSPMTDTKTVTTPGSSFTASGHSPSEIVPQDAPTISAATTFAPAPTGDGHTTQAPTTALQAAPSSHDATLGPSGGTSLSKTGALTLANSVVSTPGGPEGQWTSASASTSPDTAAAMTHTHQAESTEASGQTQTSEPASSGSRTTSAGTATPSSSGASGTTPSGSEGISTSGETTRFSSNPSRDSHTTQSTTELLSASASHGAIPVSTGMASSIVPGTFHPTLSEASTAGRPTGQSSPTSPSASPQETAAISRMAQTQRTRTSRGSDTISLASQATDTFSTVPPTPPSITSTGLTSPQTETHTLSPSGSGKTFTTALISNATPLPVTYASSASTGHTTPLHVTDASSVSTGHATPLPVTSPSSVSTGHTTPLPVTDTSSESTGHVTPLPVTSFSSASTGDSTPLPVTDTSSASTGHVTPLPVTSLSSASTGDTTPLPVTDTSSASTGHATSLPVTDTSSVSTGHTTPLPVTDTSSASTGHATSLPVTDTSSVSTGHTTPLHVTDASSASTGQATPLPVTSLSSVSTGDTTPLPVTSPSSASTGHATPLLVTDTSSASTGHATPLPVTDASSVSTDHATSLPVTIPSAASTGHTTPLPVTDTSSASTGQATSLLVTDTSSVSTGDTTPLPVTSTSSASTGHVTPLHVTSPSSASTGHATPLPVTSLSSASTGDTMPLPVTSPSSASTGDTTPLPVTDASSVSTGHTTPLHVTDASSASTGQATPLPVTSLSSVSTGDTTPLPVTSPSSASTGHATPLLVTDTSSASTGHATPLPVTDASSVSTDHATSLPVTIPSAASTGHTTPLPVTDTSSASTGQATSLLVTDTSSVSTGDTTPLPVTSTSSASTGHVTPLHVTSPSSASTGHATPLPVTSLSSASTGDTMPLPVTSPSSASTGDTTPLPVTDASSVSTGHTTPLPVTSPSSASTGHTTPLPVTDTSSASKGDTTPLPVTSPSSASTGHTTPLPVTDTSSASTGDTTPLPVTNASSLSTGHATPLHVTSPSSASTGHATPLPVTSTSSASTGHATPLPVTGLSSATTDDTTRLPVTDVSSASTGQATPLPVTSLSSVSTGDTTPLPVTSPSSASTGHASPLLVTDASSASTGQATPLPVTDTSSVSTAHATPLPVTGLSSASTDDTTRLPVTDVSSASTGQAIPLPVTSPSSASTGDTTPLPVTDASSASTGDTTSLPVTIPSSASSGHTTSLPVTDASSVSTGHATSLLVTDASSVSTGDTTPLPVTDTNSASTGDTTPLHVTDASSVSTGHATSLPVTSLSSASTGDTTPLPVTSPSSASSGHTTPLPVTDASSVPTGHATSLPVTDASSVSTGHATPLPVTDASSVSTGHATPLPVTDTSSVSTGQATPLPVTSLSSASTGDTTPLPVTDTSSASTGQDTPLPVTSLSSVSTGDTTPLPVTNPSSASTGHATPLLVTDASSISTGHATSLLVTDASSVSTGHATALHDTDASSLSTGDTTPLPVTSPSSTSTGDTTPLPVTETSSVSTGHATSLPVTDTSSASTGHATSLPVTDTSSASTGHATPLPVTDTSSASTGQATPLPVTSPSSASTGHAIPLLVTDTSSASTGQATPLPVTSLSSASTGDTTPLPVTDASSVSTGHATSLPVTSLSSVSTGDTTPLPVTSPSSASTGHATPLHVTDASSASTGHATPLPVTSLSSASTGDTTPLPVTSPSSASTGHATPLHVTDASSVSTGDTTPLPVTSSSSASSGHTTPLPVTDASSASTGDTTPLPVTDTSSASTGHATHLPVTGLSSASTGDTTRLPVTNVSSASTGHATPLPVTSTSSASTGDTTPLPGTDTSSVSTGHTTPLLVTDASSVSTGDTTRLPVTSPSSASTGHTTPLPVTDTPSASTGDTTPLPVTNASSLSTRHATSLHVTSPSSASTGHATSLPVTDTSAASTGHATPLPVTSTSSASTGDTTPLPVTDTYSASTGQATPLPVTSLSSVSTGDTTPLPVTSPSSASTGHATPLLVTDASSASTGQATPLPVTSLSSVSTGDTTPLPVTSPSSASTGHATSLPVTDTSSASTGDTTSLPVTDTSSAYTGDTTSLPVTDTSSSSTGDTTPLLVTETSSVSTGDTTPLPVTDTSSASTGHATPLPVTNTSSVSTGHATPLHVTSPSSASTGHTTPLPVTDASSVSTGHATSLPVTDASSVFTGHATSLPVTIPSSASSGHTTPLPVTDASSVSTGHATSLPVTDASSVSTGHATPLPVTDASSVSTGHATPLPLTSLSSVSTGDTTPLPVTDTSSASTGQATPLPVTSLSSVSTGDTTPLPVTDTSSASTGHATSLPVTDTSSASTGHATPLPDTDTSSASTGHATLLPVTDTSSASIGHATSLPVTDTSSISTGHATPLHVTSPSSASTGHATPLPVTDTSSASTGHANPLHVTSPSSASTGHATPLPVTDTSSASTGHATPLPVTSLSSVSTGDTTPLPVTSPSSASTGHTTPLPVTDTSSASTGQATALPVTSTSSASTGDTTPLPVTDTSSASTGQATPLPVTSLSSVSTGDTTPLPVTSPSSASTGHATPLLVTDASSASTGQATPLPVTSLSSVSTGDTTPLPVTSPSSASTGHATSLPVTDTSSASTGDTTSLPVTDTSSAYTGDTTSLPVTDTSSSSTGDTTPLLVTETSSVSTGHATPLLVTDASSASTGHATPLHVTSPSSASTGDTTPVPVTDTSSVSTGHATPLPVTGLSSASTGDTTRLPVTDISSASTGQATPLPVTNTSSVSTGDTMPLPVTSPSSASTGHATPLPVTSTSSASTGHATPVPVTSTSSASTGHTTPLPVTDTSSASTGDTTPLPVTSPSSASTGHTTPLHVTIPSSASTGDTSTLPVTGASSASTGHATPLPVTDTSSVSTGHATPLPVTSLSSVSTGDTTPLPVTDASSASTGQATPLPVTSLSSVSTGDTTPLLVTDASSVSTGHATPLPVTDTSSASTGDTTRLPVTDTSSASTGQATPLPVTSLSSVSTGDTTPLLVTDASSVSTGHATPLPVTDTSSASTGDTTRLPVTDTSSASTGQATPLPVTIPSSSSSGHTTPLPVTSTSSVSTGHVTPLHVTSPSSASTGHVTPLPVTSTSSASTGHATPLLVTDASSVSTGHATPLPVTDASSASTGDTTPLPVTDTSSASTGQATPLPVTSLSSVSTGDTTPLPVTDASSASTGHATPLPVTIPSSVSTGDTMPLPVTSPSSASTGHATPLPVTGLSSASTGDTTPLPVTDTSSASTRHATPLPVTDTSSASTDDTTRLPVTDVSSASTGHATPLPVTSTSSASTGDTTPLPVTDTSSVSTGHATSLPVTSRSSASTGHATPLPVTDTSSVSTGHATPLPVTSTSSVSTGHATPLPVTSPSSASTGHATPVPVTSTSSASTGDTTPLPVTNASSLSTGHATPLHVTSPSSASRGDTSTLPVTDASSASTGHATPLPLTSLSSVSTGDTTPLPVTDTSSASTGQATPLPVTSLSSVSTGDTTPLPVTIPSSASSGHTTSLPVTDASSVSTGHGTPLPVTSTSSASTGDTTPLPVTDTSSASTGHATPLPVTDTSSASTGHATPLPVTSLSSVSTGHATPLAVSSATSASTVSSDSPLKMETPGMTTPSLKTDGGRRTATSPPPTTSQTIISTIPSTAMHTRSTAAPIPILPERGVSLFPYGAGAGDLEFVRRTVDFTSPLFKPATGFPLGSSLRDSLYFTDNGQIIFPESDYQIFSYPNPLPTGFTGRDPVALVAPFWDDADFSTGRGTTFYQEYETFYGEHSLLVQQAESWIRKMTNNGGYKARWALKVTWVNAHAYPAQWTLGSNTYQAILSTDGSRSYALFLYQSGGMQWDVAQRSGNPVLMGFSSGDGYFENSPLMSQPVWERYRPDRFLNSNSGLQGLQFYRLHREERPNYRLECLQWLKSQPRWPSWGWNQVSCPCSWQQGRRDLRFQPVSIGRWGLGSRQLCSFTSWRGGVCCSYGPWGEFREGWHVQRPWQLAQELEPQSWCCRWNDKPYLCALYQQRRPHVGCATYRPPQPAWMFGDPHITTLDGVSYTFNGLGDFLLVGAQDGNSSFLLQGRTAQTGSAQATNFIAFAAQYRSSSLGPVTVQWLLEPHDAIRVLLDNQTVTFQPDHEDGGGQETFNATGVLLSRNGSEVSASFDGWATVSVIALSNILHASASLPPEYQNRTEGLLGVWNNNPEDDFRMPNGSTIPPGSPEEMLFHFGMTWQINGTGLLGKRNDQLPSNFTPVFYSQLQKNSSWAEHLISNCDGDSSCIYDTLALRNASIGLHTREVSKNYEQANATLNQYPPSINGGRVIEAYKGQTTLIQYTSNAEDANFTLRDSCTDLELFENGTLLWTPKSLEPFTLEILARSAKIGLASALQPRTVVCHCNAESQCLYNQTSRVGNSSLEVAGCKCDGGTFGRYCEGSEDACEEPCFPSVHCVPGKGCEACPPNLTGDGRHCAALGSSFLCQNQSCPVNYCYNQGHCYISQTLGCQPMCTCPPAFTDSRCFLAGNNFSPTVNLELPLRVIQLLLSEEENASMAEVNASVAYRLGTLDMRAFLRNSQVERIDSAAPASGSPIQHWMVISEFQYRPRGPVIDFLNNQLLAAVVEAFLYHVPRRSEEPRNDVVFQPISGEDVRDVTALNVSTLKAYFRCDGYKGYDLVYSPQSGFTCVSPCSRGYCDHGGQCQHLPSGPRCSCVSFSIYTAWGEHCEHLSMKLDAFFGIFFGALGGLLLLGVGTFVVLRFWGCSGARFSYFLNSAEALP</sequence>
<comment type="function">
    <text evidence="13 15 16 17 20">Membrane-bound mucin, a family of highly glycosylated proteins that constitute the major component of the mucus, the slimy and viscous secretion covering epithelial surfaces (PubMed:10880978). These glycoproteins play important roles in the protection of the epithelium and are implicated in epithelial renewal and differentiation (PubMed:10880978). Regulates cellular behavior through both anti-adhesive effects on cell-cell and cell-extracellular matrix interactions and its ability to act as an intramembrane ligand for ERBB2. Plays an important role in proliferation and differentiation of epithelial cells by inducing specific phosphorylation of ERBB2. In polarized epithelial cells, segregates ERBB2 and other ERBB receptors and prevents ERBB2 from acting as a coreceptor. The interaction with ERBB2 leads to enhanced expression of CDKN1B. The formation of a MUC4-ERBB2-ERBB3-NRG1 complex leads to down-regulation of CDKN1B, resulting in repression of apoptosis and stimulation of proliferation. Its ability to promote tumor growth may be mainly due to repression of apoptosis as opposed to proliferation.</text>
</comment>
<comment type="subunit">
    <text evidence="1">A heterodimeric complex, composed of a mucin-4 alpha chain and a cysteine-rich transmembrane mucin-4 beta chain. Mucin-4 beta chain interacts with ERBB2 via the EGF-like domain 1. In nonpolarized cells, associates with ERBB2 and ERBB3.</text>
</comment>
<comment type="subcellular location">
    <molecule>Mucin-4 beta chain</molecule>
    <subcellularLocation>
        <location evidence="20">Cell membrane</location>
        <topology evidence="20">Single-pass membrane protein</topology>
    </subcellularLocation>
    <text evidence="13 20">Isoforms lacking the Cys-rich region, EGF-like domains and transmembrane region are secreted. Secretion occurs by splicing or proteolytic processing.</text>
</comment>
<comment type="subcellular location">
    <molecule>Mucin-4 alpha chain</molecule>
    <subcellularLocation>
        <location evidence="20">Cell membrane</location>
    </subcellularLocation>
    <subcellularLocation>
        <location evidence="13">Secreted</location>
    </subcellularLocation>
    <text evidence="23">Forms a complex with Mucin-4 beta chain at the cell membrane.</text>
</comment>
<comment type="subcellular location">
    <molecule>Isoform 3</molecule>
    <subcellularLocation>
        <location evidence="20">Cell membrane</location>
        <topology evidence="20">Single-pass membrane protein</topology>
    </subcellularLocation>
</comment>
<comment type="subcellular location">
    <molecule>Isoform 11</molecule>
    <subcellularLocation>
        <location evidence="20">Secreted</location>
    </subcellularLocation>
</comment>
<comment type="subcellular location">
    <molecule>Isoform 15</molecule>
    <subcellularLocation>
        <location evidence="20">Secreted</location>
    </subcellularLocation>
</comment>
<comment type="subcellular location">
    <molecule>Isoform 17</molecule>
    <subcellularLocation>
        <location evidence="20">Cell membrane</location>
        <topology evidence="20">Single-pass membrane protein</topology>
    </subcellularLocation>
</comment>
<comment type="alternative products">
    <event type="alternative splicing"/>
    <isoform>
        <id>Q99102-1</id>
        <name>1</name>
        <name evidence="20">Sv0-MUC4</name>
        <name evidence="21">Sv21</name>
        <sequence type="displayed"/>
    </isoform>
    <isoform>
        <id>Q99102-2</id>
        <name>2</name>
        <name evidence="20">Sv3-MUC4</name>
        <name evidence="20">Sv4-MUC4</name>
        <name evidence="20">Sv5-MUC4</name>
        <name evidence="21">Sv12</name>
        <name evidence="21">Sv13</name>
        <sequence type="described" ref="VSP_022658 VSP_022659"/>
    </isoform>
    <isoform>
        <id>Q99102-3</id>
        <name>3</name>
        <name evidence="21">Sv20</name>
        <name evidence="20">sv7-MUC4</name>
        <sequence type="described" ref="VSP_022674 VSP_022675"/>
    </isoform>
    <isoform>
        <id>Q99102-5</id>
        <name>5</name>
        <name evidence="21">Sv18</name>
        <name evidence="21">Sv19</name>
        <sequence type="described" ref="VSP_022661 VSP_022669 VSP_022670"/>
    </isoform>
    <isoform>
        <id>Q99102-7</id>
        <name>7</name>
        <name evidence="21">Sv16</name>
        <sequence type="described" ref="VSP_022656 VSP_022665"/>
    </isoform>
    <isoform>
        <id>Q99102-8</id>
        <name>8</name>
        <name evidence="21">Sv15</name>
        <sequence type="described" ref="VSP_022657 VSP_022664"/>
    </isoform>
    <isoform>
        <id>Q99102-9</id>
        <name>9</name>
        <name evidence="21">Sv11</name>
        <sequence type="described" ref="VSP_022652 VSP_022655"/>
    </isoform>
    <isoform>
        <id>Q99102-10</id>
        <name>10</name>
        <name>Sv3</name>
        <name evidence="21">Sv17</name>
        <name evidence="21">Sv10</name>
        <sequence type="described" ref="VSP_022661"/>
    </isoform>
    <isoform>
        <id>Q99102-11</id>
        <name>11</name>
        <name evidence="20">Sv2</name>
        <name evidence="21">Sv9</name>
        <name evidence="21">Sv14</name>
        <sequence type="described" ref="VSP_022653 VSP_022663"/>
    </isoform>
    <isoform>
        <id>Q99102-12</id>
        <name>12</name>
        <name>SvX</name>
        <name evidence="20">MUC4/X</name>
        <sequence type="described" ref="VSP_022650"/>
    </isoform>
    <isoform>
        <id>Q99102-13</id>
        <name>13</name>
        <name>SvY</name>
        <name evidence="20">MUC4/Y</name>
        <sequence type="described" ref="VSP_022651"/>
    </isoform>
    <isoform>
        <id>Q99102-15</id>
        <name>15</name>
        <name evidence="20">Sv1</name>
        <sequence type="described" ref="VSP_022654 VSP_022662"/>
    </isoform>
    <isoform>
        <id>Q99102-16</id>
        <name>16</name>
        <name evidence="20">Sv6-MUC4</name>
        <sequence type="described" ref="VSP_022671 VSP_022673"/>
    </isoform>
    <isoform>
        <id>Q99102-17</id>
        <name>17</name>
        <name evidence="20">Sv8-MUC4</name>
        <sequence type="described" ref="VSP_022672"/>
    </isoform>
    <text>Additional isoforms exist.</text>
</comment>
<comment type="tissue specificity">
    <text evidence="9 10 11 16">Expressed in the thymus, thyroid, lung, trachea, esophagus, stomach, small intestine, colon, testis, prostate, ovary, uterus, placenta, and mammary and salivary glands. Expressed in carcinomas arising from some of these epithelia, such as lung cancers, squamous cell carcinomas of the upper aerodigestive tract, mammary carcinomas, biliary tract, colon, and cervix cancers. Minimally or not expressed in the normal pancreas or chronic pancreatitis, but is highly expressed in pancreatic tumors and pancreatic tumor cell lines.</text>
</comment>
<comment type="developmental stage">
    <text evidence="17">Expressed early in the primitive gut before respiratory and digestive epithelial cells have acquired their tissue and cell specificity. Expressed at the basal surface of the epithelium from week 14 to 26 weeks and then predominantly localized in only parietal cells. Immediately before birth, found in the cytoplasm of the mucous columnar epithelial cells. In the embryo expressed in skin, then disappears late in gestation.</text>
</comment>
<comment type="domain">
    <molecule>Mucin-4 alpha chain</molecule>
    <text evidence="19">Essentially composed of an array of serine- and threonine-rich tandem repeats which is highly polymorphic, the variable number of tandem repeats (VNTR) region.</text>
</comment>
<comment type="PTM">
    <text evidence="20">Proteolytically cleaved into 2 chains, mucin-4 alpha chain and mucin-4 beta chain.</text>
</comment>
<comment type="PTM">
    <molecule>Mucin-4 alpha chain</molecule>
    <text evidence="18">Highly O-glycosylated.</text>
</comment>
<comment type="PTM">
    <molecule>Mucin-4 beta chain</molecule>
    <text evidence="18">Is predominantly N-glycosylated.</text>
</comment>
<comment type="polymorphism">
    <text evidence="19">The variable number of tandem repeats (VNTR) region, an array of serine- and threonine-rich tandem repeats, is encoded by a single exon (exon 2) which is highly polymorphic.</text>
</comment>
<comment type="miscellaneous">
    <text>Expression is a very useful predictor of poor prognosis in patients with invasive ductal carcinoma and intrahepatic cholangiocarcinoma, mass forming type (IDC,ICC-MF). Patients with IDC or ICC-MF who have high MUC4 expression had a worse survival rate than those with low MUC4 expression.</text>
</comment>
<comment type="miscellaneous">
    <molecule>Isoform 2</molecule>
    <text evidence="22">May be produced at very low levels due to a premature stop codon in the mRNA, leading to nonsense-mediated mRNA decay.</text>
</comment>
<comment type="miscellaneous">
    <molecule>Isoform 3</molecule>
    <text evidence="22">May be produced at very low levels due to a premature stop codon in the mRNA, leading to nonsense-mediated mRNA decay.</text>
</comment>
<comment type="miscellaneous">
    <molecule>Isoform 5</molecule>
    <text evidence="22">May be produced at very low levels due to a premature stop codon in the mRNA, leading to nonsense-mediated mRNA decay.</text>
</comment>
<comment type="miscellaneous">
    <molecule>Isoform 7</molecule>
    <text evidence="22">May be produced at very low levels due to a premature stop codon in the mRNA, leading to nonsense-mediated mRNA decay.</text>
</comment>
<comment type="miscellaneous">
    <molecule>Isoform 8</molecule>
    <text evidence="22">May be produced at very low levels due to a premature stop codon in the mRNA, leading to nonsense-mediated mRNA decay.</text>
</comment>
<comment type="miscellaneous">
    <molecule>Isoform 9</molecule>
    <text evidence="22">Dubious isoform produced through aberrant splice sites.</text>
</comment>
<comment type="miscellaneous">
    <molecule>Isoform 11</molecule>
    <text evidence="22">May be produced at very low levels due to a premature stop codon in the mRNA, leading to nonsense-mediated mRNA decay.</text>
</comment>
<comment type="miscellaneous">
    <molecule>Isoform 12</molecule>
    <text evidence="23">May be preferentially expressed in tumor tissues.</text>
</comment>
<comment type="miscellaneous">
    <molecule>Isoform 13</molecule>
    <text evidence="23">May be preferentially expressed in tumor tissues.</text>
</comment>
<comment type="miscellaneous">
    <molecule>Isoform 15</molecule>
    <text evidence="22">May be produced at very low levels due to a premature stop codon in the mRNA, leading to nonsense-mediated mRNA decay.</text>
</comment>
<comment type="miscellaneous">
    <molecule>Isoform 16</molecule>
    <text evidence="22">Dubious isoform produced through aberrant splice sites.</text>
</comment>
<comment type="miscellaneous">
    <molecule>Isoform 17</molecule>
    <text evidence="22">Dubious isoform produced through aberrant splice sites.</text>
</comment>
<comment type="sequence caution" evidence="22">
    <conflict type="miscellaneous discrepancy">
        <sequence resource="EMBL-CDS" id="AAA63230"/>
    </conflict>
    <text>May be derived from an intron translation.</text>
</comment>
<comment type="sequence caution" evidence="22">
    <conflict type="frameshift">
        <sequence resource="EMBL-CDS" id="CAC14139"/>
    </conflict>
</comment>
<comment type="sequence caution" evidence="22">
    <conflict type="frameshift">
        <sequence resource="EMBL-CDS" id="CAC14141"/>
    </conflict>
</comment>
<comment type="online information" name="Mucin database">
    <link uri="http://www.medkem.gu.se/mucinbiology/databases/"/>
</comment>
<comment type="online information" name="Atlas of Genetics and Cytogenetics in Oncology and Haematology">
    <link uri="https://atlasgeneticsoncology.org/gene/41459/MUC4"/>
</comment>
<gene>
    <name type="primary">MUC4</name>
</gene>
<name>MUC4_HUMAN</name>
<organism>
    <name type="scientific">Homo sapiens</name>
    <name type="common">Human</name>
    <dbReference type="NCBI Taxonomy" id="9606"/>
    <lineage>
        <taxon>Eukaryota</taxon>
        <taxon>Metazoa</taxon>
        <taxon>Chordata</taxon>
        <taxon>Craniata</taxon>
        <taxon>Vertebrata</taxon>
        <taxon>Euteleostomi</taxon>
        <taxon>Mammalia</taxon>
        <taxon>Eutheria</taxon>
        <taxon>Euarchontoglires</taxon>
        <taxon>Primates</taxon>
        <taxon>Haplorrhini</taxon>
        <taxon>Catarrhini</taxon>
        <taxon>Hominidae</taxon>
        <taxon>Homo</taxon>
    </lineage>
</organism>
<keyword id="KW-0025">Alternative splicing</keyword>
<keyword id="KW-0130">Cell adhesion</keyword>
<keyword id="KW-1003">Cell membrane</keyword>
<keyword id="KW-1015">Disulfide bond</keyword>
<keyword id="KW-0245">EGF-like domain</keyword>
<keyword id="KW-0325">Glycoprotein</keyword>
<keyword id="KW-0472">Membrane</keyword>
<keyword id="KW-1267">Proteomics identification</keyword>
<keyword id="KW-1185">Reference proteome</keyword>
<keyword id="KW-0677">Repeat</keyword>
<keyword id="KW-0964">Secreted</keyword>
<keyword id="KW-0732">Signal</keyword>
<keyword id="KW-0812">Transmembrane</keyword>
<keyword id="KW-1133">Transmembrane helix</keyword>
<protein>
    <recommendedName>
        <fullName>Mucin-4</fullName>
        <shortName>MUC-4</shortName>
    </recommendedName>
    <alternativeName>
        <fullName>Ascites sialoglycoprotein</fullName>
        <shortName>ASGP</shortName>
    </alternativeName>
    <alternativeName>
        <fullName>Pancreatic adenocarcinoma mucin</fullName>
    </alternativeName>
    <alternativeName>
        <fullName>Testis mucin</fullName>
    </alternativeName>
    <alternativeName>
        <fullName>Tracheobronchial mucin</fullName>
    </alternativeName>
    <component>
        <recommendedName>
            <fullName>Mucin-4 alpha chain</fullName>
        </recommendedName>
        <alternativeName>
            <fullName>Ascites sialoglycoprotein 1</fullName>
            <shortName>ASGP-1</shortName>
        </alternativeName>
    </component>
    <component>
        <recommendedName>
            <fullName>Mucin-4 beta chain</fullName>
        </recommendedName>
        <alternativeName>
            <fullName>Ascites sialoglycoprotein 2</fullName>
            <shortName>ASGP-2</shortName>
        </alternativeName>
    </component>
</protein>
<accession>Q99102</accession>
<accession>O95938</accession>
<accession>Q9GZM2</accession>
<accession>Q9GZV6</accession>
<accession>Q9H481</accession>
<accession>Q9H482</accession>
<accession>Q9H483</accession>
<accession>Q9H484</accession>
<accession>Q9H485</accession>
<accession>Q9H486</accession>
<accession>Q9H487</accession>
<accession>Q9H4D6</accession>
<accession>Q9H4D8</accession>
<accession>Q9NPJ0</accession>
<accession>Q9NY09</accession>
<accession>Q9NY75</accession>
<accession>Q9NY76</accession>
<accession>Q9NY77</accession>
<accession>Q9NY78</accession>
<accession>Q9NY79</accession>
<accession>Q9NY80</accession>
<accession>Q9NY81</accession>
<reference key="1">
    <citation type="journal article" date="2000" name="Eur. J. Biochem.">
        <title>Alternative splicing generates a family of putative secreted and membrane-associated MUC4 mucins.</title>
        <authorList>
            <person name="Moniaux N."/>
            <person name="Escande F."/>
            <person name="Batra S.K."/>
            <person name="Porchet N."/>
            <person name="Laine A."/>
            <person name="Aubert J.-P."/>
        </authorList>
    </citation>
    <scope>NUCLEOTIDE SEQUENCE [MRNA] (ISOFORMS 12 AND 13)</scope>
    <scope>PARTIAL NUCLEOTIDE SEQUENCE [MRNA] (ISOFORMS 2; 3; 11; 15; 16 AND 17)</scope>
    <scope>SUBCELLULAR LOCATION</scope>
    <scope>TOPOLOGY</scope>
    <scope>TISSUE SPECIFICITY</scope>
    <scope>VARIANT ASP-4324</scope>
    <source>
        <tissue>Lung</tissue>
        <tissue>Testis</tissue>
    </source>
</reference>
<reference key="2">
    <citation type="journal article" date="2000" name="J. Biochem.">
        <title>Human MUC4 mucin cDNA and its variants in pancreatic carcinoma.</title>
        <authorList>
            <person name="Choudhury A."/>
            <person name="Moniaux N."/>
            <person name="Winpenny J.P."/>
            <person name="Hollingsworth M.A."/>
            <person name="Aubert J.-P."/>
            <person name="Batra S.K."/>
        </authorList>
    </citation>
    <scope>NUCLEOTIDE SEQUENCE [MRNA] (ISOFORMS 1; 2; 3; 5; 7; 8; 9; 10 AND 11)</scope>
    <scope>TISSUE SPECIFICITY</scope>
    <scope>VARIANTS PRO-41 AND ASP-4324</scope>
    <source>
        <tissue>Pancreatic tumor</tissue>
    </source>
</reference>
<reference key="3">
    <citation type="journal article" date="2002" name="Eur. J. Biochem.">
        <title>Cloning, chromosomal localization and characterization of the murine mucin gene orthologous to human MUC4.</title>
        <authorList>
            <person name="Desseyn J.-L."/>
            <person name="Clavereau I."/>
            <person name="Laine A."/>
        </authorList>
    </citation>
    <scope>NUCLEOTIDE SEQUENCE [GENOMIC DNA]</scope>
    <scope>VARIANTS PRO-41; ASP-4324 AND SER-4821</scope>
</reference>
<reference key="4">
    <citation type="journal article" date="1999" name="Biochem. J.">
        <title>Complete sequence of the human mucin MUC4: a putative cell membrane-associated mucin.</title>
        <authorList>
            <person name="Moniaux N."/>
            <person name="Nollet S."/>
            <person name="Porchet N."/>
            <person name="Degand P."/>
            <person name="Laine A."/>
            <person name="Aubert J.-P."/>
        </authorList>
    </citation>
    <scope>NUCLEOTIDE SEQUENCE [MRNA] OF 4257-5412 (ISOFORM 1)</scope>
    <scope>TISSUE SPECIFICITY</scope>
    <scope>VARIANT ASP-4324</scope>
    <source>
        <tissue>Colon mucosa</tissue>
    </source>
</reference>
<reference key="5">
    <citation type="journal article" date="2002" name="Eur. J. Biochem.">
        <title>Genomic organization of MUC4 mucin gene: towards the characterization of splice variants.</title>
        <authorList>
            <person name="Escande F."/>
            <person name="Lemaitre L."/>
            <person name="Moniaux N."/>
            <person name="Batra S.K."/>
            <person name="Aubert J.-P."/>
            <person name="Buisine M.P."/>
        </authorList>
    </citation>
    <scope>NUCLEOTIDE SEQUENCE [GENOMIC DNA] OF 4257-5412</scope>
    <scope>VARIANT ASP-4324</scope>
</reference>
<reference key="6">
    <citation type="journal article" date="1991" name="Biochem. Biophys. Res. Commun.">
        <title>Molecular cloning and chromosomal localization of a novel human tracheo-bronchial mucin cDNA containing tandemly repeated sequences of 48 base pairs.</title>
        <authorList>
            <person name="Porchet N."/>
            <person name="van Cong N."/>
            <person name="Dufosse J."/>
            <person name="Audie J.P."/>
            <person name="Guyonnet-Duperat V."/>
            <person name="Gross M.S."/>
            <person name="Denis C."/>
            <person name="Degand P."/>
            <person name="Bernheim A."/>
            <person name="Aubert J.-P."/>
        </authorList>
    </citation>
    <scope>PRELIMINARY PARTIAL NUCLEOTIDE SEQUENCE [MRNA]</scope>
</reference>
<reference key="7">
    <citation type="journal article" date="2006" name="Nature">
        <title>The DNA sequence, annotation and analysis of human chromosome 3.</title>
        <authorList>
            <person name="Muzny D.M."/>
            <person name="Scherer S.E."/>
            <person name="Kaul R."/>
            <person name="Wang J."/>
            <person name="Yu J."/>
            <person name="Sudbrak R."/>
            <person name="Buhay C.J."/>
            <person name="Chen R."/>
            <person name="Cree A."/>
            <person name="Ding Y."/>
            <person name="Dugan-Rocha S."/>
            <person name="Gill R."/>
            <person name="Gunaratne P."/>
            <person name="Harris R.A."/>
            <person name="Hawes A.C."/>
            <person name="Hernandez J."/>
            <person name="Hodgson A.V."/>
            <person name="Hume J."/>
            <person name="Jackson A."/>
            <person name="Khan Z.M."/>
            <person name="Kovar-Smith C."/>
            <person name="Lewis L.R."/>
            <person name="Lozado R.J."/>
            <person name="Metzker M.L."/>
            <person name="Milosavljevic A."/>
            <person name="Miner G.R."/>
            <person name="Morgan M.B."/>
            <person name="Nazareth L.V."/>
            <person name="Scott G."/>
            <person name="Sodergren E."/>
            <person name="Song X.-Z."/>
            <person name="Steffen D."/>
            <person name="Wei S."/>
            <person name="Wheeler D.A."/>
            <person name="Wright M.W."/>
            <person name="Worley K.C."/>
            <person name="Yuan Y."/>
            <person name="Zhang Z."/>
            <person name="Adams C.Q."/>
            <person name="Ansari-Lari M.A."/>
            <person name="Ayele M."/>
            <person name="Brown M.J."/>
            <person name="Chen G."/>
            <person name="Chen Z."/>
            <person name="Clendenning J."/>
            <person name="Clerc-Blankenburg K.P."/>
            <person name="Chen R."/>
            <person name="Chen Z."/>
            <person name="Davis C."/>
            <person name="Delgado O."/>
            <person name="Dinh H.H."/>
            <person name="Dong W."/>
            <person name="Draper H."/>
            <person name="Ernst S."/>
            <person name="Fu G."/>
            <person name="Gonzalez-Garay M.L."/>
            <person name="Garcia D.K."/>
            <person name="Gillett W."/>
            <person name="Gu J."/>
            <person name="Hao B."/>
            <person name="Haugen E."/>
            <person name="Havlak P."/>
            <person name="He X."/>
            <person name="Hennig S."/>
            <person name="Hu S."/>
            <person name="Huang W."/>
            <person name="Jackson L.R."/>
            <person name="Jacob L.S."/>
            <person name="Kelly S.H."/>
            <person name="Kube M."/>
            <person name="Levy R."/>
            <person name="Li Z."/>
            <person name="Liu B."/>
            <person name="Liu J."/>
            <person name="Liu W."/>
            <person name="Lu J."/>
            <person name="Maheshwari M."/>
            <person name="Nguyen B.-V."/>
            <person name="Okwuonu G.O."/>
            <person name="Palmeiri A."/>
            <person name="Pasternak S."/>
            <person name="Perez L.M."/>
            <person name="Phelps K.A."/>
            <person name="Plopper F.J."/>
            <person name="Qiang B."/>
            <person name="Raymond C."/>
            <person name="Rodriguez R."/>
            <person name="Saenphimmachak C."/>
            <person name="Santibanez J."/>
            <person name="Shen H."/>
            <person name="Shen Y."/>
            <person name="Subramanian S."/>
            <person name="Tabor P.E."/>
            <person name="Verduzco D."/>
            <person name="Waldron L."/>
            <person name="Wang J."/>
            <person name="Wang J."/>
            <person name="Wang Q."/>
            <person name="Williams G.A."/>
            <person name="Wong G.K.-S."/>
            <person name="Yao Z."/>
            <person name="Zhang J."/>
            <person name="Zhang X."/>
            <person name="Zhao G."/>
            <person name="Zhou J."/>
            <person name="Zhou Y."/>
            <person name="Nelson D."/>
            <person name="Lehrach H."/>
            <person name="Reinhardt R."/>
            <person name="Naylor S.L."/>
            <person name="Yang H."/>
            <person name="Olson M."/>
            <person name="Weinstock G."/>
            <person name="Gibbs R.A."/>
        </authorList>
    </citation>
    <scope>NUCLEOTIDE SEQUENCE [LARGE SCALE GENOMIC DNA]</scope>
</reference>
<reference key="8">
    <citation type="journal article" date="1998" name="Biochem. J.">
        <title>Human mucin gene MUC4: organization of its 5'-region and polymorphism of its central tandem repeat array.</title>
        <authorList>
            <person name="Nollet S."/>
            <person name="Moniaux N."/>
            <person name="Maury J."/>
            <person name="Petitprez D."/>
            <person name="Degand P."/>
            <person name="Laine A."/>
            <person name="Porchet N."/>
            <person name="Aubert J.P."/>
        </authorList>
    </citation>
    <scope>DOMAIN</scope>
    <scope>POLYMORPHISM</scope>
</reference>
<reference key="9">
    <citation type="journal article" date="2002" name="Prog. Nucleic Acid Res. Mol. Biol.">
        <title>Muc4/sialomucin complex, the intramembrane ErbB2 ligand, in cancer and epithelia: to protect and to survive.</title>
        <authorList>
            <person name="Carraway K.L."/>
            <person name="Perez A."/>
            <person name="Idris N."/>
            <person name="Jepson S."/>
            <person name="Arango M.E."/>
            <person name="Komatsu M."/>
            <person name="Haq B."/>
            <person name="Price-Schiavi S.A."/>
            <person name="Zhang J."/>
            <person name="Carraway C.A."/>
        </authorList>
    </citation>
    <scope>FUNCTION</scope>
    <scope>SUBCELLULAR LOCATION</scope>
</reference>
<reference key="10">
    <citation type="journal article" date="2005" name="J. Clin. Pathol.">
        <title>MUC4 expression is a novel prognostic factor in patients with invasive ductal carcinoma of the pancreas.</title>
        <authorList>
            <person name="Saitou M."/>
            <person name="Goto M."/>
            <person name="Horinouchi M."/>
            <person name="Tamada S."/>
            <person name="Nagata K."/>
            <person name="Hamada T."/>
            <person name="Osako M."/>
            <person name="Takao S."/>
            <person name="Batra S.K."/>
            <person name="Aikou T."/>
            <person name="Imai K."/>
            <person name="Yonezawa S."/>
        </authorList>
    </citation>
    <scope>FUNCTION</scope>
</reference>
<reference key="11">
    <citation type="journal article" date="2006" name="Pathol. Res. Pract.">
        <title>MUC4 expression and its relation to ErbB2 expression, apoptosis, proliferation, differentiation, and tumor stage in non-small cell lung cancer (NSCLC).</title>
        <authorList>
            <person name="Karg A."/>
            <person name="Dinc Z.A."/>
            <person name="Basok O."/>
            <person name="Ucvet A."/>
        </authorList>
    </citation>
    <scope>TISSUE SPECIFICITY</scope>
    <scope>FUNCTION</scope>
</reference>
<reference key="12">
    <citation type="journal article" date="2006" name="Tissue Cell">
        <title>MUC4 expression and localization in gastrointestinal tract and skin of human embryos.</title>
        <authorList>
            <person name="Zhang J."/>
            <person name="Yasin M."/>
            <person name="Carraway C.A."/>
            <person name="Carraway K.L."/>
        </authorList>
    </citation>
    <scope>DEVELOPMENTAL STAGE</scope>
    <scope>FUNCTION</scope>
</reference>
<reference key="13">
    <citation type="journal article" date="2008" name="Proteomics">
        <title>Identification of N-linked glycoproteins in human milk by hydrophilic interaction liquid chromatography and mass spectrometry.</title>
        <authorList>
            <person name="Picariello G."/>
            <person name="Ferranti P."/>
            <person name="Mamone G."/>
            <person name="Roepstorff P."/>
            <person name="Addeo F."/>
        </authorList>
    </citation>
    <scope>GLYCOSYLATION [LARGE SCALE ANALYSIS] AT ASN-5052</scope>
    <source>
        <tissue>Milk</tissue>
    </source>
</reference>